<keyword id="KW-0002">3D-structure</keyword>
<keyword id="KW-0025">Alternative splicing</keyword>
<keyword id="KW-0903">Direct protein sequencing</keyword>
<keyword id="KW-0225">Disease variant</keyword>
<keyword id="KW-0227">DNA damage</keyword>
<keyword id="KW-0234">DNA repair</keyword>
<keyword id="KW-0235">DNA replication</keyword>
<keyword id="KW-0237">DNA synthesis</keyword>
<keyword id="KW-0238">DNA-binding</keyword>
<keyword id="KW-0239">DNA-directed DNA polymerase</keyword>
<keyword id="KW-1017">Isopeptide bond</keyword>
<keyword id="KW-0460">Magnesium</keyword>
<keyword id="KW-0479">Metal-binding</keyword>
<keyword id="KW-0515">Mutator protein</keyword>
<keyword id="KW-0548">Nucleotidyltransferase</keyword>
<keyword id="KW-0539">Nucleus</keyword>
<keyword id="KW-1267">Proteomics identification</keyword>
<keyword id="KW-1185">Reference proteome</keyword>
<keyword id="KW-0704">Schiff base</keyword>
<keyword id="KW-0808">Transferase</keyword>
<keyword id="KW-0832">Ubl conjugation</keyword>
<keyword id="KW-0857">Xeroderma pigmentosum</keyword>
<keyword id="KW-0862">Zinc</keyword>
<keyword id="KW-0863">Zinc-finger</keyword>
<evidence type="ECO:0000250" key="1">
    <source>
        <dbReference type="UniProtKB" id="Q9JJN0"/>
    </source>
</evidence>
<evidence type="ECO:0000255" key="2">
    <source>
        <dbReference type="PROSITE-ProRule" id="PRU00216"/>
    </source>
</evidence>
<evidence type="ECO:0000255" key="3">
    <source>
        <dbReference type="PROSITE-ProRule" id="PRU01255"/>
    </source>
</evidence>
<evidence type="ECO:0000256" key="4">
    <source>
        <dbReference type="SAM" id="MobiDB-lite"/>
    </source>
</evidence>
<evidence type="ECO:0000269" key="5">
    <source>
    </source>
</evidence>
<evidence type="ECO:0000269" key="6">
    <source>
    </source>
</evidence>
<evidence type="ECO:0000269" key="7">
    <source>
    </source>
</evidence>
<evidence type="ECO:0000269" key="8">
    <source>
    </source>
</evidence>
<evidence type="ECO:0000269" key="9">
    <source>
    </source>
</evidence>
<evidence type="ECO:0000269" key="10">
    <source>
    </source>
</evidence>
<evidence type="ECO:0000269" key="11">
    <source>
    </source>
</evidence>
<evidence type="ECO:0000269" key="12">
    <source>
    </source>
</evidence>
<evidence type="ECO:0000269" key="13">
    <source>
    </source>
</evidence>
<evidence type="ECO:0000269" key="14">
    <source>
    </source>
</evidence>
<evidence type="ECO:0000269" key="15">
    <source>
    </source>
</evidence>
<evidence type="ECO:0000269" key="16">
    <source>
    </source>
</evidence>
<evidence type="ECO:0000269" key="17">
    <source>
    </source>
</evidence>
<evidence type="ECO:0000269" key="18">
    <source>
    </source>
</evidence>
<evidence type="ECO:0000269" key="19">
    <source>
    </source>
</evidence>
<evidence type="ECO:0000269" key="20">
    <source>
    </source>
</evidence>
<evidence type="ECO:0000269" key="21">
    <source>
    </source>
</evidence>
<evidence type="ECO:0000269" key="22">
    <source>
    </source>
</evidence>
<evidence type="ECO:0000269" key="23">
    <source>
    </source>
</evidence>
<evidence type="ECO:0000269" key="24">
    <source>
    </source>
</evidence>
<evidence type="ECO:0000269" key="25">
    <source>
    </source>
</evidence>
<evidence type="ECO:0000269" key="26">
    <source>
    </source>
</evidence>
<evidence type="ECO:0000269" key="27">
    <source>
    </source>
</evidence>
<evidence type="ECO:0000269" key="28">
    <source>
    </source>
</evidence>
<evidence type="ECO:0000269" key="29">
    <source>
    </source>
</evidence>
<evidence type="ECO:0000269" key="30">
    <source ref="4"/>
</evidence>
<evidence type="ECO:0000303" key="31">
    <source>
    </source>
</evidence>
<evidence type="ECO:0000305" key="32"/>
<evidence type="ECO:0007744" key="33">
    <source>
        <dbReference type="PDB" id="3WUP"/>
    </source>
</evidence>
<evidence type="ECO:0007744" key="34">
    <source>
        <dbReference type="PDB" id="5KFA"/>
    </source>
</evidence>
<evidence type="ECO:0007744" key="35">
    <source>
        <dbReference type="PDB" id="5KFB"/>
    </source>
</evidence>
<evidence type="ECO:0007744" key="36">
    <source>
        <dbReference type="PDB" id="5KFC"/>
    </source>
</evidence>
<evidence type="ECO:0007744" key="37">
    <source>
        <dbReference type="PDB" id="5KFD"/>
    </source>
</evidence>
<evidence type="ECO:0007744" key="38">
    <source>
        <dbReference type="PDB" id="5KFE"/>
    </source>
</evidence>
<evidence type="ECO:0007744" key="39">
    <source>
        <dbReference type="PDB" id="5KFF"/>
    </source>
</evidence>
<evidence type="ECO:0007744" key="40">
    <source>
        <dbReference type="PDB" id="5KFN"/>
    </source>
</evidence>
<evidence type="ECO:0007744" key="41">
    <source>
        <dbReference type="PDB" id="5KFO"/>
    </source>
</evidence>
<evidence type="ECO:0007744" key="42">
    <source>
        <dbReference type="PDB" id="5KFP"/>
    </source>
</evidence>
<evidence type="ECO:0007829" key="43">
    <source>
        <dbReference type="PDB" id="2LSK"/>
    </source>
</evidence>
<evidence type="ECO:0007829" key="44">
    <source>
        <dbReference type="PDB" id="3MR5"/>
    </source>
</evidence>
<evidence type="ECO:0007829" key="45">
    <source>
        <dbReference type="PDB" id="3WUP"/>
    </source>
</evidence>
<evidence type="ECO:0007829" key="46">
    <source>
        <dbReference type="PDB" id="4J9O"/>
    </source>
</evidence>
<evidence type="ECO:0007829" key="47">
    <source>
        <dbReference type="PDB" id="4YQW"/>
    </source>
</evidence>
<evidence type="ECO:0007829" key="48">
    <source>
        <dbReference type="PDB" id="5DG8"/>
    </source>
</evidence>
<evidence type="ECO:0007829" key="49">
    <source>
        <dbReference type="PDB" id="5KFS"/>
    </source>
</evidence>
<evidence type="ECO:0007829" key="50">
    <source>
        <dbReference type="PDB" id="6UQI"/>
    </source>
</evidence>
<evidence type="ECO:0007829" key="51">
    <source>
        <dbReference type="PDB" id="7M7N"/>
    </source>
</evidence>
<evidence type="ECO:0007829" key="52">
    <source>
        <dbReference type="PDB" id="7M7P"/>
    </source>
</evidence>
<evidence type="ECO:0007829" key="53">
    <source>
        <dbReference type="PDB" id="7U7I"/>
    </source>
</evidence>
<comment type="function">
    <text evidence="5 9 10 12 14 15 17 24 26 29">DNA polymerase specifically involved in the DNA repair by translesion synthesis (TLS) (PubMed:10385124, PubMed:11743006, PubMed:16357261, PubMed:24449906, PubMed:24553286, PubMed:38212351). Due to low processivity on both damaged and normal DNA, cooperates with the heterotetrameric (REV3L, REV7, POLD2 and POLD3) POLZ complex for complete bypass of DNA lesions. Inserts one or 2 nucleotide(s) opposite the lesion, the primer is further extended by the tetrameric POLZ complex. In the case of 1,2-intrastrand d(GpG)-cisplatin cross-link, inserts dCTP opposite the 3' guanine (PubMed:24449906). Particularly important for the repair of UV-induced pyrimidine dimers (PubMed:10385124, PubMed:11743006). Although inserts the correct base, may cause base transitions and transversions depending upon the context. May play a role in hypermutation at immunoglobulin genes (PubMed:11376341, PubMed:14734526). Forms a Schiff base with 5'-deoxyribose phosphate at abasic sites, but does not have any lyase activity, preventing the release of the 5'-deoxyribose phosphate (5'-dRP) residue. This covalent trapping of the enzyme by the 5'-dRP residue inhibits its DNA synthetic activity during base excision repair, thereby avoiding high incidence of mutagenesis (PubMed:14630940). Targets POLI to replication foci (PubMed:12606586).</text>
</comment>
<comment type="catalytic activity">
    <reaction evidence="28 29">
        <text>DNA(n) + a 2'-deoxyribonucleoside 5'-triphosphate = DNA(n+1) + diphosphate</text>
        <dbReference type="Rhea" id="RHEA:22508"/>
        <dbReference type="Rhea" id="RHEA-COMP:17339"/>
        <dbReference type="Rhea" id="RHEA-COMP:17340"/>
        <dbReference type="ChEBI" id="CHEBI:33019"/>
        <dbReference type="ChEBI" id="CHEBI:61560"/>
        <dbReference type="ChEBI" id="CHEBI:173112"/>
        <dbReference type="EC" id="2.7.7.7"/>
    </reaction>
</comment>
<comment type="cofactor">
    <cofactor evidence="28">
        <name>Mg(2+)</name>
        <dbReference type="ChEBI" id="CHEBI:18420"/>
    </cofactor>
    <cofactor evidence="28">
        <name>Mn(2+)</name>
        <dbReference type="ChEBI" id="CHEBI:29035"/>
    </cofactor>
    <text evidence="28">Binds 2 Mg(2+) (PubMed:27284197). Prefers Mg(2+), but can also use Mn(2+) (PubMed:27284197). In vitro, can also utilize other divalent cations such as Ca(2+) (PubMed:27284197).</text>
</comment>
<comment type="activity regulation">
    <text evidence="28">The enzyme in complex with the DNA substrate binds a third divalent metal cation (PubMed:27284197). The binding of this third divalent cation, which is coordinated by water molecules and two oxygen atoms from DNA and dNTP, is essential for catalyzing the DNA synthesis (PubMed:27284197).</text>
</comment>
<comment type="subunit">
    <text evidence="1 12 16 17 20 25 26">Interacts with REV1 (By similarity). Interacts with monoubiquitinated PCNA, but not unmodified PCNA (PubMed:15149598). Interacts with POLI; this interaction targets POLI to the replication machinery (PubMed:12606586). Interacts with PALB2 and BRCA2; the interactions are direct and are required to sustain the recruitment of POLH at blocked replication forks and to stimulate POLH-dependent DNA synthesis on D loop substrates (PubMed:24485656). Interacts (via C-terminus) with TRAIP (PubMed:24553286). Interacts with ubiquitin (PubMed:16357261). Interacts with POLDIP2 (PubMed:20554254).</text>
</comment>
<comment type="interaction">
    <interactant intactId="EBI-2827270">
        <id>Q9Y253</id>
    </interactant>
    <interactant intactId="EBI-79792">
        <id>P51587</id>
        <label>BRCA2</label>
    </interactant>
    <organismsDiffer>false</organismsDiffer>
    <experiments>6</experiments>
</comment>
<comment type="interaction">
    <interactant intactId="EBI-2827270">
        <id>Q9Y253</id>
    </interactant>
    <interactant intactId="EBI-1222653">
        <id>Q86YC2</id>
        <label>PALB2</label>
    </interactant>
    <organismsDiffer>false</organismsDiffer>
    <experiments>7</experiments>
</comment>
<comment type="interaction">
    <interactant intactId="EBI-2827270">
        <id>Q9Y253</id>
    </interactant>
    <interactant intactId="EBI-8469539">
        <id>Q6FI35</id>
        <label>PCNA</label>
    </interactant>
    <organismsDiffer>false</organismsDiffer>
    <experiments>3</experiments>
</comment>
<comment type="interaction">
    <interactant intactId="EBI-2827270">
        <id>Q9Y253</id>
    </interactant>
    <interactant intactId="EBI-3390054">
        <id>P0CG48</id>
        <label>UBC</label>
    </interactant>
    <organismsDiffer>false</organismsDiffer>
    <experiments>4</experiments>
</comment>
<comment type="subcellular location">
    <subcellularLocation>
        <location evidence="12 17 22 26">Nucleus</location>
    </subcellularLocation>
    <text evidence="12 17 22 26">Binding to ubiquitinated PCNA mediates colocalization to replication foci during DNA replication and persists at sites of stalled replication forks following UV irradiation (PubMed:12606586, PubMed:16357261, PubMed:24553286). After UV irradiation, recruited to DNA damage sites within 1 hour, to a maximum of about 80%; this recruitment may not be not restricted to cells active in DNA replication (PubMed:22801543). Colocalizes with TRAIP to nuclear foci (PubMed:24553286).</text>
</comment>
<comment type="alternative products">
    <event type="alternative splicing"/>
    <isoform>
        <id>Q9Y253-1</id>
        <name>1</name>
        <sequence type="displayed"/>
    </isoform>
    <isoform>
        <id>Q9Y253-2</id>
        <name>2</name>
        <sequence type="described" ref="VSP_012799"/>
    </isoform>
</comment>
<comment type="domain">
    <text evidence="28">The catalytic core consists of fingers, palm and thumb subdomains, but the fingers and thumb subdomains are much smaller than in high-fidelity polymerases; residues from five sequence motifs of the Y-family cluster around an active site cleft that can accommodate DNA and nucleotide substrates with relaxed geometric constraints, with consequently higher rates of misincorporation and low processivity.</text>
</comment>
<comment type="domain">
    <text evidence="16 17">The UBZ3-type zinc finger domain and the PIP-box mediate the interaction with ubiquitinated PCNA and are both necessary for the enzymatic activity in translesion synthesis.</text>
</comment>
<comment type="PTM">
    <text evidence="17 19 21 26">Monoubiquitinated by RCHY1/PIRH2 (PubMed:20159558, PubMed:21791603). Ubiquitination depends on integrity of the UBZ3-type zinc finger domain and is enhanced by TRAIP (PubMed:16357261, PubMed:24553286). Ubiquitination inhibits the ability of PolH to interact with PCNA and to bypass UV-induced lesions (PubMed:20159558, PubMed:21791603, PubMed:24553286).</text>
</comment>
<comment type="disease" evidence="5 6 7 8 11 23 29">
    <disease id="DI-01162">
        <name>Xeroderma pigmentosum variant type</name>
        <acronym>XPV</acronym>
        <description>An autosomal recessive pigmentary skin disorder characterized by solar hypersensitivity of the skin, high predisposition for developing cancers on areas exposed to sunlight and, in some cases, neurological abnormalities. XPV shows normal nucleotide excision repair, but an exaggerated delay in recovery of replicative DNA synthesis. Most patients with the variant type of xeroderma pigmentosum do not develop clinical symptoms and skin neoplasias until a later age. Clinical manifestations are limited to photo-induced deterioration of the skin and eyes.</description>
        <dbReference type="MIM" id="278750"/>
    </disease>
    <text>The disease is caused by variants affecting the gene represented in this entry.</text>
</comment>
<comment type="similarity">
    <text evidence="32">Belongs to the DNA polymerase type-Y family.</text>
</comment>
<comment type="online information" name="Atlas of Genetics and Cytogenetics in Oncology and Haematology">
    <link uri="https://atlasgeneticsoncology.org/gene/303/XPV"/>
</comment>
<feature type="chain" id="PRO_0000173986" description="DNA polymerase eta">
    <location>
        <begin position="1"/>
        <end position="713"/>
    </location>
</feature>
<feature type="domain" description="UmuC" evidence="2">
    <location>
        <begin position="9"/>
        <end position="259"/>
    </location>
</feature>
<feature type="zinc finger region" description="UBZ3-type" evidence="3">
    <location>
        <begin position="628"/>
        <end position="662"/>
    </location>
</feature>
<feature type="region of interest" description="Disordered" evidence="4">
    <location>
        <begin position="441"/>
        <end position="472"/>
    </location>
</feature>
<feature type="region of interest" description="Disordered" evidence="4">
    <location>
        <begin position="495"/>
        <end position="527"/>
    </location>
</feature>
<feature type="region of interest" description="Disordered" evidence="4">
    <location>
        <begin position="677"/>
        <end position="705"/>
    </location>
</feature>
<feature type="short sequence motif" description="PIP-box" evidence="16 17">
    <location>
        <begin position="701"/>
        <end position="708"/>
    </location>
</feature>
<feature type="compositionally biased region" description="Polar residues" evidence="4">
    <location>
        <begin position="456"/>
        <end position="466"/>
    </location>
</feature>
<feature type="compositionally biased region" description="Polar residues" evidence="4">
    <location>
        <begin position="497"/>
        <end position="527"/>
    </location>
</feature>
<feature type="binding site" evidence="28 40 42">
    <location>
        <position position="13"/>
    </location>
    <ligand>
        <name>Mg(2+)</name>
        <dbReference type="ChEBI" id="CHEBI:18420"/>
        <label>1</label>
    </ligand>
</feature>
<feature type="binding site" evidence="28 40 42">
    <location>
        <position position="13"/>
    </location>
    <ligand>
        <name>Mg(2+)</name>
        <dbReference type="ChEBI" id="CHEBI:18420"/>
        <label>2</label>
    </ligand>
</feature>
<feature type="binding site" evidence="28 41">
    <location>
        <position position="13"/>
    </location>
    <ligand>
        <name>Mn(2+)</name>
        <dbReference type="ChEBI" id="CHEBI:29035"/>
        <label>1</label>
    </ligand>
</feature>
<feature type="binding site" evidence="28 41">
    <location>
        <position position="13"/>
    </location>
    <ligand>
        <name>Mn(2+)</name>
        <dbReference type="ChEBI" id="CHEBI:29035"/>
        <label>2</label>
    </ligand>
</feature>
<feature type="binding site" evidence="28 40 42">
    <location>
        <position position="14"/>
    </location>
    <ligand>
        <name>Mg(2+)</name>
        <dbReference type="ChEBI" id="CHEBI:18420"/>
        <label>1</label>
    </ligand>
</feature>
<feature type="binding site" evidence="28 41">
    <location>
        <position position="14"/>
    </location>
    <ligand>
        <name>Mn(2+)</name>
        <dbReference type="ChEBI" id="CHEBI:29035"/>
        <label>1</label>
    </ligand>
</feature>
<feature type="binding site" evidence="28">
    <location>
        <position position="61"/>
    </location>
    <ligand>
        <name>a 2'-deoxyribonucleoside 5'-triphosphate</name>
        <dbReference type="ChEBI" id="CHEBI:61560"/>
    </ligand>
</feature>
<feature type="binding site" evidence="28 40 42">
    <location>
        <position position="115"/>
    </location>
    <ligand>
        <name>Mg(2+)</name>
        <dbReference type="ChEBI" id="CHEBI:18420"/>
        <label>1</label>
    </ligand>
</feature>
<feature type="binding site" evidence="28 40 42">
    <location>
        <position position="115"/>
    </location>
    <ligand>
        <name>Mg(2+)</name>
        <dbReference type="ChEBI" id="CHEBI:18420"/>
        <label>2</label>
    </ligand>
</feature>
<feature type="binding site" evidence="28 41">
    <location>
        <position position="115"/>
    </location>
    <ligand>
        <name>Mn(2+)</name>
        <dbReference type="ChEBI" id="CHEBI:29035"/>
        <label>1</label>
    </ligand>
</feature>
<feature type="binding site" evidence="28 41">
    <location>
        <position position="115"/>
    </location>
    <ligand>
        <name>Mn(2+)</name>
        <dbReference type="ChEBI" id="CHEBI:29035"/>
        <label>2</label>
    </ligand>
</feature>
<feature type="binding site" evidence="28 40 42">
    <location>
        <position position="116"/>
    </location>
    <ligand>
        <name>Mg(2+)</name>
        <dbReference type="ChEBI" id="CHEBI:18420"/>
        <label>2</label>
    </ligand>
</feature>
<feature type="binding site" evidence="28 41">
    <location>
        <position position="116"/>
    </location>
    <ligand>
        <name>Mn(2+)</name>
        <dbReference type="ChEBI" id="CHEBI:29035"/>
        <label>2</label>
    </ligand>
</feature>
<feature type="binding site" evidence="3 27 33">
    <location>
        <position position="635"/>
    </location>
    <ligand>
        <name>Zn(2+)</name>
        <dbReference type="ChEBI" id="CHEBI:29105"/>
    </ligand>
</feature>
<feature type="binding site" evidence="3 27 33">
    <location>
        <position position="638"/>
    </location>
    <ligand>
        <name>Zn(2+)</name>
        <dbReference type="ChEBI" id="CHEBI:29105"/>
    </ligand>
</feature>
<feature type="binding site" evidence="3 27 33">
    <location>
        <position position="650"/>
    </location>
    <ligand>
        <name>Zn(2+)</name>
        <dbReference type="ChEBI" id="CHEBI:29105"/>
    </ligand>
</feature>
<feature type="binding site" evidence="3 27 33">
    <location>
        <position position="654"/>
    </location>
    <ligand>
        <name>Zn(2+)</name>
        <dbReference type="ChEBI" id="CHEBI:29105"/>
    </ligand>
</feature>
<feature type="cross-link" description="Glycyl lysine isopeptide (Lys-Gly) (interchain with G-Cter in ubiquitin)" evidence="19">
    <location>
        <position position="682"/>
    </location>
</feature>
<feature type="cross-link" description="Glycyl lysine isopeptide (Lys-Gly) (interchain with G-Cter in ubiquitin)" evidence="19">
    <location>
        <position position="686"/>
    </location>
</feature>
<feature type="cross-link" description="Glycyl lysine isopeptide (Lys-Gly) (interchain with G-Cter in ubiquitin)" evidence="19">
    <location>
        <position position="694"/>
    </location>
</feature>
<feature type="cross-link" description="Glycyl lysine isopeptide (Lys-Gly) (interchain with G-Cter in ubiquitin)" evidence="19">
    <location>
        <position position="709"/>
    </location>
</feature>
<feature type="splice variant" id="VSP_012799" description="In isoform 2." evidence="31">
    <location>
        <begin position="415"/>
        <end position="713"/>
    </location>
</feature>
<feature type="sequence variant" id="VAR_070835" description="In XPV." evidence="23">
    <location>
        <position position="37"/>
    </location>
</feature>
<feature type="sequence variant" id="VAR_021226" description="In XPV; impairs translesion synthesis." evidence="6 11">
    <location>
        <position position="75"/>
    </location>
</feature>
<feature type="sequence variant" id="VAR_070836" description="In XPV; dbSNP:rs756931657." evidence="23">
    <original>R</original>
    <variation>P</variation>
    <location>
        <position position="93"/>
    </location>
</feature>
<feature type="sequence variant" id="VAR_021227" description="In XPV; dbSNP:rs758423288." evidence="11">
    <original>R</original>
    <variation>H</variation>
    <location>
        <position position="111"/>
    </location>
</feature>
<feature type="sequence variant" id="VAR_021228" description="In XPV; dbSNP:rs1561900151." evidence="11">
    <original>T</original>
    <variation>P</variation>
    <location>
        <position position="122"/>
    </location>
</feature>
<feature type="sequence variant" id="VAR_036220" description="In a breast cancer sample; somatic mutation; dbSNP:rs367709714." evidence="18">
    <original>G</original>
    <variation>D</variation>
    <location>
        <position position="153"/>
    </location>
</feature>
<feature type="sequence variant" id="VAR_089215" description="In XPV; likely pathogenic; loss of DNA-directed DNA polymerase activity; loss of function in translesion synthesis; dbSNP:rs760104150." evidence="29">
    <original>T</original>
    <variation>P</variation>
    <location>
        <position position="191"/>
    </location>
</feature>
<feature type="sequence variant" id="VAR_021229" description="In dbSNP:rs2307456." evidence="30">
    <original>G</original>
    <variation>V</variation>
    <location>
        <position position="209"/>
    </location>
</feature>
<feature type="sequence variant" id="VAR_021230" description="In XPV; impairs translesion synthesis; dbSNP:rs1413703153." evidence="11">
    <original>G</original>
    <variation>V</variation>
    <location>
        <position position="263"/>
    </location>
</feature>
<feature type="sequence variant" id="VAR_070837" description="In XPV." evidence="23">
    <original>V</original>
    <variation>D</variation>
    <location>
        <position position="266"/>
    </location>
</feature>
<feature type="sequence variant" id="VAR_070838" description="In XPV." evidence="23">
    <original>G</original>
    <variation>R</variation>
    <location>
        <position position="295"/>
    </location>
</feature>
<feature type="sequence variant" id="VAR_021231" description="In dbSNP:rs9333548." evidence="30">
    <original>R</original>
    <variation>W</variation>
    <location>
        <position position="334"/>
    </location>
</feature>
<feature type="sequence variant" id="VAR_021232" description="In XPV; dbSNP:rs1767786898." evidence="11">
    <original>R</original>
    <variation>S</variation>
    <location>
        <position position="361"/>
    </location>
</feature>
<feature type="sequence variant" id="VAR_021233" description="In dbSNP:rs9296419." evidence="30">
    <original>T</original>
    <variation>M</variation>
    <location>
        <position position="478"/>
    </location>
</feature>
<feature type="sequence variant" id="VAR_021234" description="In XPV; dbSNP:rs56307355." evidence="8">
    <original>K</original>
    <variation>E</variation>
    <location>
        <position position="535"/>
    </location>
</feature>
<feature type="sequence variant" id="VAR_021235" description="In dbSNP:rs9333554." evidence="30">
    <original>L</original>
    <variation>P</variation>
    <location>
        <position position="584"/>
    </location>
</feature>
<feature type="sequence variant" id="VAR_021236" description="In XPV; dbSNP:rs121908565." evidence="8">
    <original>K</original>
    <variation>T</variation>
    <location>
        <position position="589"/>
    </location>
</feature>
<feature type="sequence variant" id="VAR_021237" description="In dbSNP:rs9333555." evidence="30">
    <original>M</original>
    <variation>V</variation>
    <location>
        <position position="595"/>
    </location>
</feature>
<feature type="sequence variant" id="VAR_021238" description="In dbSNP:rs6941583." evidence="30">
    <original>M</original>
    <variation>L</variation>
    <location>
        <position position="647"/>
    </location>
</feature>
<feature type="sequence variant" id="VAR_070839" description="In XPV; dbSNP:rs199562456." evidence="23">
    <original>T</original>
    <variation>A</variation>
    <location>
        <position position="692"/>
    </location>
</feature>
<feature type="mutagenesis site" description="Reduces DNA polymerase activity." evidence="13">
    <original>Y</original>
    <variation>A</variation>
    <variation>F</variation>
    <location>
        <position position="52"/>
    </location>
</feature>
<feature type="mutagenesis site" description="Reduces DNA polymerase activity. Increases fidelity of replication and reduces translesion bypass." evidence="13">
    <original>Y</original>
    <variation>E</variation>
    <location>
        <position position="52"/>
    </location>
</feature>
<feature type="mutagenesis site" description="Reduces enzymatic activity by two-thirds." evidence="28">
    <original>R</original>
    <variation>A</variation>
    <location>
        <position position="61"/>
    </location>
</feature>
<feature type="mutagenesis site" description="Increased DNA polymerase activity and translesion bypass compared to wild-type." evidence="10">
    <original>S</original>
    <variation>G</variation>
    <location>
        <position position="62"/>
    </location>
</feature>
<feature type="mutagenesis site" description="Severe reduction in thymine dimer translesion bypass." evidence="10">
    <original>A</original>
    <variation>S</variation>
    <variation>V</variation>
    <location>
        <position position="68"/>
    </location>
</feature>
<feature type="mutagenesis site" description="Reduces binding to chromatin and to monoubiquitinated PCNA. Abolishes binding to monoubiquitinated PCNA; when associated with 705-E--H-713 Del." evidence="16">
    <original>NFP</original>
    <variation>AAA</variation>
    <location>
        <begin position="324"/>
        <end position="326"/>
    </location>
</feature>
<feature type="mutagenesis site" description="Reduces cell resistance to UV-induced DNA damage." evidence="17">
    <original>C</original>
    <variation>A</variation>
    <location>
        <position position="638"/>
    </location>
</feature>
<feature type="mutagenesis site" description="Abolishes ubiquitin binding and localization to nuclear foci after UV-induced DNA damage but does not affect catalytic activity." evidence="17">
    <original>D</original>
    <variation>A</variation>
    <location>
        <position position="652"/>
    </location>
</feature>
<feature type="mutagenesis site" description="Reduces cell resistance to UV-induced DNA damage. Reduces binding to chromatin and to monoubiquitinated PCNA. Abolishes binding to monoubiquitinated PCNA; when associated with 324-A--A-326." evidence="16 17">
    <location>
        <begin position="705"/>
        <end position="713"/>
    </location>
</feature>
<feature type="helix" evidence="44">
    <location>
        <begin position="1"/>
        <end position="3"/>
    </location>
</feature>
<feature type="strand" evidence="51">
    <location>
        <begin position="9"/>
        <end position="14"/>
    </location>
</feature>
<feature type="helix" evidence="51">
    <location>
        <begin position="17"/>
        <end position="25"/>
    </location>
</feature>
<feature type="helix" evidence="51">
    <location>
        <begin position="27"/>
        <end position="29"/>
    </location>
</feature>
<feature type="strand" evidence="51">
    <location>
        <begin position="34"/>
        <end position="38"/>
    </location>
</feature>
<feature type="turn" evidence="51">
    <location>
        <begin position="41"/>
        <end position="44"/>
    </location>
</feature>
<feature type="strand" evidence="51">
    <location>
        <begin position="46"/>
        <end position="50"/>
    </location>
</feature>
<feature type="helix" evidence="51">
    <location>
        <begin position="52"/>
        <end position="55"/>
    </location>
</feature>
<feature type="turn" evidence="51">
    <location>
        <begin position="56"/>
        <end position="58"/>
    </location>
</feature>
<feature type="strand" evidence="49">
    <location>
        <begin position="61"/>
        <end position="64"/>
    </location>
</feature>
<feature type="helix" evidence="51">
    <location>
        <begin position="65"/>
        <end position="71"/>
    </location>
</feature>
<feature type="strand" evidence="51">
    <location>
        <begin position="76"/>
        <end position="79"/>
    </location>
</feature>
<feature type="strand" evidence="53">
    <location>
        <begin position="81"/>
        <end position="83"/>
    </location>
</feature>
<feature type="strand" evidence="53">
    <location>
        <begin position="86"/>
        <end position="88"/>
    </location>
</feature>
<feature type="helix" evidence="51">
    <location>
        <begin position="90"/>
        <end position="104"/>
    </location>
</feature>
<feature type="strand" evidence="51">
    <location>
        <begin position="109"/>
        <end position="113"/>
    </location>
</feature>
<feature type="strand" evidence="51">
    <location>
        <begin position="116"/>
        <end position="120"/>
    </location>
</feature>
<feature type="helix" evidence="51">
    <location>
        <begin position="122"/>
        <end position="132"/>
    </location>
</feature>
<feature type="helix" evidence="51">
    <location>
        <begin position="139"/>
        <end position="141"/>
    </location>
</feature>
<feature type="strand" evidence="51">
    <location>
        <begin position="145"/>
        <end position="147"/>
    </location>
</feature>
<feature type="helix" evidence="52">
    <location>
        <begin position="159"/>
        <end position="161"/>
    </location>
</feature>
<feature type="helix" evidence="51">
    <location>
        <begin position="163"/>
        <end position="176"/>
    </location>
</feature>
<feature type="helix" evidence="51">
    <location>
        <begin position="186"/>
        <end position="208"/>
    </location>
</feature>
<feature type="strand" evidence="51">
    <location>
        <begin position="212"/>
        <end position="219"/>
    </location>
</feature>
<feature type="helix" evidence="51">
    <location>
        <begin position="220"/>
        <end position="229"/>
    </location>
</feature>
<feature type="turn" evidence="46">
    <location>
        <begin position="230"/>
        <end position="233"/>
    </location>
</feature>
<feature type="strand" evidence="51">
    <location>
        <begin position="235"/>
        <end position="237"/>
    </location>
</feature>
<feature type="helix" evidence="51">
    <location>
        <begin position="240"/>
        <end position="242"/>
    </location>
</feature>
<feature type="helix" evidence="51">
    <location>
        <begin position="243"/>
        <end position="248"/>
    </location>
</feature>
<feature type="helix" evidence="51">
    <location>
        <begin position="252"/>
        <end position="254"/>
    </location>
</feature>
<feature type="turn" evidence="50">
    <location>
        <begin position="256"/>
        <end position="258"/>
    </location>
</feature>
<feature type="helix" evidence="51">
    <location>
        <begin position="261"/>
        <end position="270"/>
    </location>
</feature>
<feature type="helix" evidence="51">
    <location>
        <begin position="275"/>
        <end position="280"/>
    </location>
</feature>
<feature type="helix" evidence="51">
    <location>
        <begin position="283"/>
        <end position="290"/>
    </location>
</feature>
<feature type="helix" evidence="51">
    <location>
        <begin position="292"/>
        <end position="301"/>
    </location>
</feature>
<feature type="turn" evidence="51">
    <location>
        <begin position="302"/>
        <end position="304"/>
    </location>
</feature>
<feature type="strand" evidence="48">
    <location>
        <begin position="313"/>
        <end position="315"/>
    </location>
</feature>
<feature type="strand" evidence="51">
    <location>
        <begin position="319"/>
        <end position="324"/>
    </location>
</feature>
<feature type="helix" evidence="51">
    <location>
        <begin position="327"/>
        <end position="329"/>
    </location>
</feature>
<feature type="strand" evidence="51">
    <location>
        <begin position="331"/>
        <end position="333"/>
    </location>
</feature>
<feature type="helix" evidence="51">
    <location>
        <begin position="334"/>
        <end position="359"/>
    </location>
</feature>
<feature type="strand" evidence="51">
    <location>
        <begin position="360"/>
        <end position="372"/>
    </location>
</feature>
<feature type="turn" evidence="47">
    <location>
        <begin position="373"/>
        <end position="375"/>
    </location>
</feature>
<feature type="strand" evidence="51">
    <location>
        <begin position="376"/>
        <end position="378"/>
    </location>
</feature>
<feature type="strand" evidence="51">
    <location>
        <begin position="380"/>
        <end position="386"/>
    </location>
</feature>
<feature type="helix" evidence="51">
    <location>
        <begin position="392"/>
        <end position="403"/>
    </location>
</feature>
<feature type="helix" evidence="51">
    <location>
        <begin position="404"/>
        <end position="406"/>
    </location>
</feature>
<feature type="strand" evidence="51">
    <location>
        <begin position="414"/>
        <end position="431"/>
    </location>
</feature>
<feature type="helix" evidence="43">
    <location>
        <begin position="532"/>
        <end position="538"/>
    </location>
</feature>
<feature type="strand" evidence="45">
    <location>
        <begin position="632"/>
        <end position="634"/>
    </location>
</feature>
<feature type="turn" evidence="45">
    <location>
        <begin position="636"/>
        <end position="638"/>
    </location>
</feature>
<feature type="strand" evidence="45">
    <location>
        <begin position="641"/>
        <end position="643"/>
    </location>
</feature>
<feature type="helix" evidence="45">
    <location>
        <begin position="644"/>
        <end position="646"/>
    </location>
</feature>
<feature type="helix" evidence="45">
    <location>
        <begin position="647"/>
        <end position="659"/>
    </location>
</feature>
<name>POLH_HUMAN</name>
<reference key="1">
    <citation type="journal article" date="1999" name="Nature">
        <title>The XPV (Xeroderma pigmentosum variant) gene encodes human DNA polymerase eta.</title>
        <authorList>
            <person name="Masutani C."/>
            <person name="Kusumoto R."/>
            <person name="Yamada A."/>
            <person name="Dohmae N."/>
            <person name="Yokoi M."/>
            <person name="Yuasa M."/>
            <person name="Araki M."/>
            <person name="Iwai S."/>
            <person name="Takio K."/>
            <person name="Hanaoka F."/>
        </authorList>
    </citation>
    <scope>NUCLEOTIDE SEQUENCE [MRNA] (ISOFORM 1)</scope>
    <scope>PROTEIN SEQUENCE OF 132-163; 395-404; 429-450 AND 495-511</scope>
    <scope>FUNCTION</scope>
    <scope>INVOLVEMENT IN XPV</scope>
    <scope>ALTERNATIVE SPLICING</scope>
    <source>
        <tissue>Cervix carcinoma</tissue>
    </source>
</reference>
<reference key="2">
    <citation type="journal article" date="1999" name="Science">
        <title>hRAD30 mutations in the variant form of xeroderma pigmentosum.</title>
        <authorList>
            <person name="Johnson R.E."/>
            <person name="Kondratick C.M."/>
            <person name="Prakash S."/>
            <person name="Prakash L."/>
        </authorList>
    </citation>
    <scope>NUCLEOTIDE SEQUENCE [MRNA] (ISOFORM 1)</scope>
    <scope>VARIANT XPV LEU-75 DEL</scope>
</reference>
<reference key="3">
    <citation type="journal article" date="2000" name="Oncogene">
        <title>Genomic structure, chromosomal localization and identification of mutations in the xeroderma pigmentosum variant (XPV) gene.</title>
        <authorList>
            <person name="Yuasa M."/>
            <person name="Masutani C."/>
            <person name="Eki T."/>
            <person name="Hanaoka F."/>
        </authorList>
    </citation>
    <scope>NUCLEOTIDE SEQUENCE [GENOMIC DNA]</scope>
    <scope>INVOLVEMENT IN XPV</scope>
</reference>
<reference key="4">
    <citation type="submission" date="2003-09" db="EMBL/GenBank/DDBJ databases">
        <authorList>
            <consortium name="NIEHS SNPs program"/>
        </authorList>
    </citation>
    <scope>NUCLEOTIDE SEQUENCE [GENOMIC DNA]</scope>
    <scope>VARIANTS VAL-209; TRP-334; MET-478; PRO-584; VAL-595 AND LEU-647</scope>
</reference>
<reference key="5">
    <citation type="journal article" date="2003" name="Nature">
        <title>The DNA sequence and analysis of human chromosome 6.</title>
        <authorList>
            <person name="Mungall A.J."/>
            <person name="Palmer S.A."/>
            <person name="Sims S.K."/>
            <person name="Edwards C.A."/>
            <person name="Ashurst J.L."/>
            <person name="Wilming L."/>
            <person name="Jones M.C."/>
            <person name="Horton R."/>
            <person name="Hunt S.E."/>
            <person name="Scott C.E."/>
            <person name="Gilbert J.G.R."/>
            <person name="Clamp M.E."/>
            <person name="Bethel G."/>
            <person name="Milne S."/>
            <person name="Ainscough R."/>
            <person name="Almeida J.P."/>
            <person name="Ambrose K.D."/>
            <person name="Andrews T.D."/>
            <person name="Ashwell R.I.S."/>
            <person name="Babbage A.K."/>
            <person name="Bagguley C.L."/>
            <person name="Bailey J."/>
            <person name="Banerjee R."/>
            <person name="Barker D.J."/>
            <person name="Barlow K.F."/>
            <person name="Bates K."/>
            <person name="Beare D.M."/>
            <person name="Beasley H."/>
            <person name="Beasley O."/>
            <person name="Bird C.P."/>
            <person name="Blakey S.E."/>
            <person name="Bray-Allen S."/>
            <person name="Brook J."/>
            <person name="Brown A.J."/>
            <person name="Brown J.Y."/>
            <person name="Burford D.C."/>
            <person name="Burrill W."/>
            <person name="Burton J."/>
            <person name="Carder C."/>
            <person name="Carter N.P."/>
            <person name="Chapman J.C."/>
            <person name="Clark S.Y."/>
            <person name="Clark G."/>
            <person name="Clee C.M."/>
            <person name="Clegg S."/>
            <person name="Cobley V."/>
            <person name="Collier R.E."/>
            <person name="Collins J.E."/>
            <person name="Colman L.K."/>
            <person name="Corby N.R."/>
            <person name="Coville G.J."/>
            <person name="Culley K.M."/>
            <person name="Dhami P."/>
            <person name="Davies J."/>
            <person name="Dunn M."/>
            <person name="Earthrowl M.E."/>
            <person name="Ellington A.E."/>
            <person name="Evans K.A."/>
            <person name="Faulkner L."/>
            <person name="Francis M.D."/>
            <person name="Frankish A."/>
            <person name="Frankland J."/>
            <person name="French L."/>
            <person name="Garner P."/>
            <person name="Garnett J."/>
            <person name="Ghori M.J."/>
            <person name="Gilby L.M."/>
            <person name="Gillson C.J."/>
            <person name="Glithero R.J."/>
            <person name="Grafham D.V."/>
            <person name="Grant M."/>
            <person name="Gribble S."/>
            <person name="Griffiths C."/>
            <person name="Griffiths M.N.D."/>
            <person name="Hall R."/>
            <person name="Halls K.S."/>
            <person name="Hammond S."/>
            <person name="Harley J.L."/>
            <person name="Hart E.A."/>
            <person name="Heath P.D."/>
            <person name="Heathcott R."/>
            <person name="Holmes S.J."/>
            <person name="Howden P.J."/>
            <person name="Howe K.L."/>
            <person name="Howell G.R."/>
            <person name="Huckle E."/>
            <person name="Humphray S.J."/>
            <person name="Humphries M.D."/>
            <person name="Hunt A.R."/>
            <person name="Johnson C.M."/>
            <person name="Joy A.A."/>
            <person name="Kay M."/>
            <person name="Keenan S.J."/>
            <person name="Kimberley A.M."/>
            <person name="King A."/>
            <person name="Laird G.K."/>
            <person name="Langford C."/>
            <person name="Lawlor S."/>
            <person name="Leongamornlert D.A."/>
            <person name="Leversha M."/>
            <person name="Lloyd C.R."/>
            <person name="Lloyd D.M."/>
            <person name="Loveland J.E."/>
            <person name="Lovell J."/>
            <person name="Martin S."/>
            <person name="Mashreghi-Mohammadi M."/>
            <person name="Maslen G.L."/>
            <person name="Matthews L."/>
            <person name="McCann O.T."/>
            <person name="McLaren S.J."/>
            <person name="McLay K."/>
            <person name="McMurray A."/>
            <person name="Moore M.J.F."/>
            <person name="Mullikin J.C."/>
            <person name="Niblett D."/>
            <person name="Nickerson T."/>
            <person name="Novik K.L."/>
            <person name="Oliver K."/>
            <person name="Overton-Larty E.K."/>
            <person name="Parker A."/>
            <person name="Patel R."/>
            <person name="Pearce A.V."/>
            <person name="Peck A.I."/>
            <person name="Phillimore B.J.C.T."/>
            <person name="Phillips S."/>
            <person name="Plumb R.W."/>
            <person name="Porter K.M."/>
            <person name="Ramsey Y."/>
            <person name="Ranby S.A."/>
            <person name="Rice C.M."/>
            <person name="Ross M.T."/>
            <person name="Searle S.M."/>
            <person name="Sehra H.K."/>
            <person name="Sheridan E."/>
            <person name="Skuce C.D."/>
            <person name="Smith S."/>
            <person name="Smith M."/>
            <person name="Spraggon L."/>
            <person name="Squares S.L."/>
            <person name="Steward C.A."/>
            <person name="Sycamore N."/>
            <person name="Tamlyn-Hall G."/>
            <person name="Tester J."/>
            <person name="Theaker A.J."/>
            <person name="Thomas D.W."/>
            <person name="Thorpe A."/>
            <person name="Tracey A."/>
            <person name="Tromans A."/>
            <person name="Tubby B."/>
            <person name="Wall M."/>
            <person name="Wallis J.M."/>
            <person name="West A.P."/>
            <person name="White S.S."/>
            <person name="Whitehead S.L."/>
            <person name="Whittaker H."/>
            <person name="Wild A."/>
            <person name="Willey D.J."/>
            <person name="Wilmer T.E."/>
            <person name="Wood J.M."/>
            <person name="Wray P.W."/>
            <person name="Wyatt J.C."/>
            <person name="Young L."/>
            <person name="Younger R.M."/>
            <person name="Bentley D.R."/>
            <person name="Coulson A."/>
            <person name="Durbin R.M."/>
            <person name="Hubbard T."/>
            <person name="Sulston J.E."/>
            <person name="Dunham I."/>
            <person name="Rogers J."/>
            <person name="Beck S."/>
        </authorList>
    </citation>
    <scope>NUCLEOTIDE SEQUENCE [LARGE SCALE GENOMIC DNA]</scope>
</reference>
<reference key="6">
    <citation type="journal article" date="2004" name="Genome Res.">
        <title>The status, quality, and expansion of the NIH full-length cDNA project: the Mammalian Gene Collection (MGC).</title>
        <authorList>
            <consortium name="The MGC Project Team"/>
        </authorList>
    </citation>
    <scope>NUCLEOTIDE SEQUENCE [LARGE SCALE MRNA] (ISOFORM 2)</scope>
    <source>
        <tissue>Skin</tissue>
    </source>
</reference>
<reference key="7">
    <citation type="journal article" date="2001" name="EMBO J.">
        <title>Mutations in human DNA polymerase eta motif II alter bypass of DNA lesions.</title>
        <authorList>
            <person name="Glick E."/>
            <person name="Vigna K.L."/>
            <person name="Loeb L.A."/>
        </authorList>
    </citation>
    <scope>FUNCTION</scope>
    <scope>MUTAGENESIS OF SER-62 AND ALA-68</scope>
</reference>
<reference key="8">
    <citation type="journal article" date="2001" name="Nat. Immunol.">
        <title>DNA polymerase eta is an A-T mutator in somatic hypermutation of immunoglobulin variable genes.</title>
        <authorList>
            <person name="Zeng X."/>
            <person name="Winter D.B."/>
            <person name="Kasmer C."/>
            <person name="Kraemer K.H."/>
            <person name="Lehmann A.R."/>
            <person name="Gearhart P.J."/>
        </authorList>
    </citation>
    <scope>FUNCTION</scope>
</reference>
<reference key="9">
    <citation type="journal article" date="2003" name="EMBO J.">
        <title>Localization of DNA polymerases eta and iota to the replication machinery is tightly co-ordinated in human cells.</title>
        <authorList>
            <person name="Kannouche P.L."/>
            <person name="Fernandez de Henestrosa A.R."/>
            <person name="Coull B."/>
            <person name="Vidal A.E."/>
            <person name="Gray C."/>
            <person name="Zicha D."/>
            <person name="Woodgate R."/>
            <person name="Lehmann A.R."/>
        </authorList>
    </citation>
    <scope>FUNCTION</scope>
    <scope>INTERACTION WITH POLI</scope>
    <scope>SUBCELLULAR LOCATION</scope>
</reference>
<reference key="10">
    <citation type="journal article" date="2003" name="Genes Dev.">
        <title>A mechanism for the exclusion of low-fidelity human Y-family DNA polymerases from base excision repair.</title>
        <authorList>
            <person name="Haracska L."/>
            <person name="Prakash L."/>
            <person name="Prakash S."/>
        </authorList>
    </citation>
    <scope>FUNCTION</scope>
    <scope>SCHIFF BASE FORMATION</scope>
</reference>
<reference key="11">
    <citation type="journal article" date="2003" name="J. Biol. Chem.">
        <title>Amino acid substitutions at conserved tyrosine 52 alter fidelity and bypass efficiency of human DNA polymerase eta.</title>
        <authorList>
            <person name="Glick E."/>
            <person name="Chau J.S."/>
            <person name="Vigna K.L."/>
            <person name="McCulloch S.D."/>
            <person name="Adman E.T."/>
            <person name="Kunkel T.A."/>
            <person name="Loeb L.A."/>
        </authorList>
    </citation>
    <scope>MUTAGENESIS OF TYR-52</scope>
</reference>
<reference key="12">
    <citation type="journal article" date="2004" name="J. Exp. Med.">
        <title>DNA polymerase eta is involved in hypermutation occurring during immunoglobulin class switch recombination.</title>
        <authorList>
            <person name="Faili A."/>
            <person name="Aoufouchi S."/>
            <person name="Weller S."/>
            <person name="Vuillier F."/>
            <person name="Stary A."/>
            <person name="Sarasin A."/>
            <person name="Reynaud C.-A."/>
            <person name="Weill J.-C."/>
        </authorList>
    </citation>
    <scope>FUNCTION</scope>
</reference>
<reference key="13">
    <citation type="journal article" date="2004" name="Mol. Cell">
        <title>Interaction of human DNA polymerase eta with monoubiquitinated PCNA: a possible mechanism for the polymerase switch in response to DNA damage.</title>
        <authorList>
            <person name="Kannouche P.L."/>
            <person name="Wing J."/>
            <person name="Lehmann A.R."/>
        </authorList>
    </citation>
    <scope>INTERACTION WITH MONOUBIQUITINATED PCNA</scope>
    <scope>MOTIF</scope>
    <scope>MUTAGENESIS OF 324-ASN--PRO-326 AND 705-GLU--HIS-713</scope>
</reference>
<reference key="14">
    <citation type="journal article" date="2005" name="Science">
        <title>Ubiquitin-binding domains in Y-family polymerases regulate translesion synthesis.</title>
        <authorList>
            <person name="Bienko M."/>
            <person name="Green C.M."/>
            <person name="Crosetto N."/>
            <person name="Rudolf F."/>
            <person name="Zapart G."/>
            <person name="Coull B."/>
            <person name="Kannouche P."/>
            <person name="Wider G."/>
            <person name="Peter M."/>
            <person name="Lehmann A.R."/>
            <person name="Hofmann K."/>
            <person name="Dikic I."/>
        </authorList>
    </citation>
    <scope>FUNCTION</scope>
    <scope>INTERACTION WITH UBIQUITIN</scope>
    <scope>SUBCELLULAR LOCATION</scope>
    <scope>UBIQUITINATION</scope>
    <scope>MOTIF</scope>
    <scope>MUTAGENESIS OF CYS-638; ASP-652 AND 705-GLU--HIS-713</scope>
</reference>
<reference key="15">
    <citation type="journal article" date="2010" name="DNA Repair">
        <title>Crosstalk between replicative and translesional DNA polymerases: PDIP38 interacts directly with Poleta.</title>
        <authorList>
            <person name="Tissier A."/>
            <person name="Janel-Bintz R."/>
            <person name="Coulon S."/>
            <person name="Klaile E."/>
            <person name="Kannouche P."/>
            <person name="Fuchs R.P."/>
            <person name="Cordonnier A.M."/>
        </authorList>
    </citation>
    <scope>INTERACTION WITH POLDIP2</scope>
</reference>
<reference key="16">
    <citation type="journal article" date="2010" name="Mol. Cell">
        <title>Regulation of translesion synthesis DNA polymerase eta by monoubiquitination.</title>
        <authorList>
            <person name="Bienko M."/>
            <person name="Green C.M."/>
            <person name="Sabbioneda S."/>
            <person name="Crosetto N."/>
            <person name="Matic I."/>
            <person name="Hibbert R.G."/>
            <person name="Begovic T."/>
            <person name="Niimi A."/>
            <person name="Mann M."/>
            <person name="Lehmann A.R."/>
            <person name="Dikic I."/>
        </authorList>
    </citation>
    <scope>UBIQUITINATION AT LYS-682; LYS-686; LYS-694 AND LYS-709</scope>
</reference>
<reference key="17">
    <citation type="journal article" date="2011" name="Mol. Cell. Biol.">
        <title>Pirh2 E3 ubiquitin ligase monoubiquitinates DNA polymerase eta to suppress translesion DNA synthesis.</title>
        <authorList>
            <person name="Jung Y.S."/>
            <person name="Hakem A."/>
            <person name="Hakem R."/>
            <person name="Chen X."/>
        </authorList>
    </citation>
    <scope>UBIQUITINATION BY RCHY1/PIRH2</scope>
</reference>
<reference key="18">
    <citation type="journal article" date="2012" name="Cell Cycle">
        <title>Spatiotemporal recruitment of human DNA polymerase delta to sites of UV damage.</title>
        <authorList>
            <person name="Chea J."/>
            <person name="Zhang S."/>
            <person name="Zhao H."/>
            <person name="Zhang Z."/>
            <person name="Lee E.Y."/>
            <person name="Darzynkiewicz Z."/>
            <person name="Lee M.Y."/>
        </authorList>
    </citation>
    <scope>SUBCELLULAR LOCATION</scope>
</reference>
<reference key="19">
    <citation type="journal article" date="2014" name="Development">
        <title>TRIP/NOPO E3 ubiquitin ligase promotes ubiquitylation of DNA polymerase eta.</title>
        <authorList>
            <person name="Wallace H.A."/>
            <person name="Merkle J.A."/>
            <person name="Yu M.C."/>
            <person name="Berg T.G."/>
            <person name="Lee E."/>
            <person name="Bosco G."/>
            <person name="Lee L.A."/>
        </authorList>
    </citation>
    <scope>FUNCTION</scope>
    <scope>INTERACTION WITH TRAIP</scope>
    <scope>SUBCELLULAR LOCATION</scope>
    <scope>UBIQUITINATION BY TRAIP</scope>
</reference>
<reference key="20">
    <citation type="journal article" date="2014" name="Cell Rep.">
        <title>Breast cancer proteins PALB2 and BRCA2 stimulate polymerase eta in recombination-associated DNA synthesis at blocked replication forks.</title>
        <authorList>
            <person name="Buisson R."/>
            <person name="Niraj J."/>
            <person name="Pauty J."/>
            <person name="Maity R."/>
            <person name="Zhao W."/>
            <person name="Coulombe Y."/>
            <person name="Sung P."/>
            <person name="Masson J.Y."/>
        </authorList>
    </citation>
    <scope>INTERACTION WITH PALB2 AND BRCA2</scope>
</reference>
<reference key="21">
    <citation type="journal article" date="2014" name="Proc. Natl. Acad. Sci. U.S.A.">
        <title>Human Pol zeta purified with accessory subunits is active in translesion DNA synthesis and complements Pol eta in cisplatin bypass.</title>
        <authorList>
            <person name="Lee Y.S."/>
            <person name="Gregory M.T."/>
            <person name="Yang W."/>
        </authorList>
    </citation>
    <scope>FUNCTION</scope>
</reference>
<reference evidence="33" key="22">
    <citation type="journal article" date="2016" name="FEBS J.">
        <title>A novel mode of ubiquitin recognition by the ubiquitin-binding zinc finger domain of WRNIP1.</title>
        <authorList>
            <person name="Suzuki N."/>
            <person name="Rohaim A."/>
            <person name="Kato R."/>
            <person name="Dikic I."/>
            <person name="Wakatsuki S."/>
            <person name="Kawasaki M."/>
        </authorList>
    </citation>
    <scope>X-RAY CRYSTALLOGRAPHY (1.60 ANGSTROMS) OF 630-665 IN COMPLEX WITH ZINC</scope>
</reference>
<reference evidence="34 35 36 37 38 39" key="23">
    <citation type="journal article" date="2016" name="Science">
        <title>Capture of a third Mg is essential for catalyzing DNA synthesis.</title>
        <authorList>
            <person name="Gao Y."/>
            <person name="Yang W."/>
        </authorList>
    </citation>
    <scope>X-RAY CRYSTALLOGRAPHY (1.44 ANGSTROMS) OF 1-432 IN COMPLEX WITH DNA; NUCLEOTIDE; MAGNESIUM AND MANGANESE</scope>
    <scope>CATALYTIC ACTIVITY</scope>
    <scope>COFACTOR</scope>
    <scope>ACTIVITY REGULATION</scope>
    <scope>DOMAIN</scope>
    <scope>MUTAGENESIS OF ARG-61</scope>
</reference>
<reference key="24">
    <citation type="journal article" date="2000" name="J. Invest. Dermatol.">
        <title>Xeroderma pigmentosum variant heterozygotes show reduced levels of recovery of replicative DNA synthesis in the presence of caffeine after ultraviolet irradiation.</title>
        <authorList>
            <person name="Itoh T."/>
            <person name="Linn S."/>
            <person name="Kamide R."/>
            <person name="Tokushige H."/>
            <person name="Katori N."/>
            <person name="Hosaka Y."/>
            <person name="Yamaizumi M."/>
        </authorList>
    </citation>
    <scope>VARIANTS XPV GLU-535 AND THR-589</scope>
    <scope>INVOLVEMENT IN XPV</scope>
</reference>
<reference key="25">
    <citation type="journal article" date="2002" name="Proc. Natl. Acad. Sci. U.S.A.">
        <title>Molecular analysis of mutations in DNA polymerase eta in xeroderma pigmentosum variant patients.</title>
        <authorList>
            <person name="Broughton B.C."/>
            <person name="Cordonnier A."/>
            <person name="Kleijer W.J."/>
            <person name="Jaspers N.G."/>
            <person name="Fawcett H."/>
            <person name="Raams A."/>
            <person name="Garritsen V.H."/>
            <person name="Stary A."/>
            <person name="Avril M.-F."/>
            <person name="Boudsocq F."/>
            <person name="Masutani C."/>
            <person name="Hanaoka F."/>
            <person name="Fuchs R.P.P."/>
            <person name="Sarasin A."/>
            <person name="Lehmann A.R."/>
        </authorList>
    </citation>
    <scope>VARIANTS XPV LEU-75 DEL; HIS-111; PRO-122; VAL-263 AND SER-361</scope>
    <scope>INVOLVEMENT IN XPV</scope>
</reference>
<reference key="26">
    <citation type="journal article" date="2014" name="Hum. Mutat.">
        <title>Correlation of phenotype/genotype in a cohort of 23 xeroderma pigmentosum-variant patients reveals 12 new disease-causing POLH mutations.</title>
        <authorList>
            <person name="Opletalova K."/>
            <person name="Bourillon A."/>
            <person name="Yang W."/>
            <person name="Pouvelle C."/>
            <person name="Armier J."/>
            <person name="Despras E."/>
            <person name="Ludovic M."/>
            <person name="Mateus C."/>
            <person name="Robert C."/>
            <person name="Kannouche P."/>
            <person name="Soufir N."/>
            <person name="Sarasin A."/>
        </authorList>
    </citation>
    <scope>VARIANTS XPV VAL-37 DEL; PRO-93; ASP-266; ARG-295 AND ALA-692</scope>
    <scope>INVOLVEMENT IN XPV</scope>
</reference>
<reference key="27">
    <citation type="journal article" date="2006" name="Science">
        <title>The consensus coding sequences of human breast and colorectal cancers.</title>
        <authorList>
            <person name="Sjoeblom T."/>
            <person name="Jones S."/>
            <person name="Wood L.D."/>
            <person name="Parsons D.W."/>
            <person name="Lin J."/>
            <person name="Barber T.D."/>
            <person name="Mandelker D."/>
            <person name="Leary R.J."/>
            <person name="Ptak J."/>
            <person name="Silliman N."/>
            <person name="Szabo S."/>
            <person name="Buckhaults P."/>
            <person name="Farrell C."/>
            <person name="Meeh P."/>
            <person name="Markowitz S.D."/>
            <person name="Willis J."/>
            <person name="Dawson D."/>
            <person name="Willson J.K.V."/>
            <person name="Gazdar A.F."/>
            <person name="Hartigan J."/>
            <person name="Wu L."/>
            <person name="Liu C."/>
            <person name="Parmigiani G."/>
            <person name="Park B.H."/>
            <person name="Bachman K.E."/>
            <person name="Papadopoulos N."/>
            <person name="Vogelstein B."/>
            <person name="Kinzler K.W."/>
            <person name="Velculescu V.E."/>
        </authorList>
    </citation>
    <scope>VARIANT [LARGE SCALE ANALYSIS] ASP-153</scope>
</reference>
<reference key="28">
    <citation type="journal article" date="2024" name="Sci. Rep.">
        <title>Homozygous substitution of threonine 191 by proline in polymerase eta causes Xeroderma pigmentosum variant.</title>
        <authorList>
            <person name="Ricciardiello R."/>
            <person name="Forleo G."/>
            <person name="Cipolla L."/>
            <person name="van Winckel G."/>
            <person name="Marconi C."/>
            <person name="Nouspikel T."/>
            <person name="Halazonetis T.D."/>
            <person name="Zgheib O."/>
            <person name="Sabbioneda S."/>
        </authorList>
    </citation>
    <scope>VARIANT XPV PRO-191</scope>
    <scope>CHARACTERIZATION OF VARIANT XPV PRO-191</scope>
    <scope>FUNCTION</scope>
    <scope>CATALYTIC ACTIVITY</scope>
    <scope>INVOLVEMENT IN XPV</scope>
</reference>
<gene>
    <name type="primary">POLH</name>
    <name type="synonym">RAD30</name>
    <name type="synonym">RAD30A</name>
    <name type="synonym">XPV</name>
</gene>
<dbReference type="EC" id="2.7.7.7" evidence="28 29"/>
<dbReference type="EMBL" id="AB024313">
    <property type="protein sequence ID" value="BAA81666.1"/>
    <property type="molecule type" value="mRNA"/>
</dbReference>
<dbReference type="EMBL" id="AF158185">
    <property type="protein sequence ID" value="AAD43810.1"/>
    <property type="molecule type" value="mRNA"/>
</dbReference>
<dbReference type="EMBL" id="AB038008">
    <property type="protein sequence ID" value="BAB18601.1"/>
    <property type="molecule type" value="Genomic_DNA"/>
</dbReference>
<dbReference type="EMBL" id="AY388614">
    <property type="protein sequence ID" value="AAQ81300.1"/>
    <property type="molecule type" value="Genomic_DNA"/>
</dbReference>
<dbReference type="EMBL" id="AL353602">
    <property type="status" value="NOT_ANNOTATED_CDS"/>
    <property type="molecule type" value="Genomic_DNA"/>
</dbReference>
<dbReference type="EMBL" id="AL355802">
    <property type="status" value="NOT_ANNOTATED_CDS"/>
    <property type="molecule type" value="Genomic_DNA"/>
</dbReference>
<dbReference type="EMBL" id="BC015742">
    <property type="protein sequence ID" value="AAH15742.1"/>
    <property type="molecule type" value="mRNA"/>
</dbReference>
<dbReference type="CCDS" id="CCDS4902.1">
    <molecule id="Q9Y253-1"/>
</dbReference>
<dbReference type="CCDS" id="CCDS78147.1">
    <molecule id="Q9Y253-2"/>
</dbReference>
<dbReference type="RefSeq" id="NP_001278899.1">
    <molecule id="Q9Y253-2"/>
    <property type="nucleotide sequence ID" value="NM_001291970.2"/>
</dbReference>
<dbReference type="RefSeq" id="NP_006493.1">
    <molecule id="Q9Y253-1"/>
    <property type="nucleotide sequence ID" value="NM_006502.3"/>
</dbReference>
<dbReference type="PDB" id="2I5O">
    <property type="method" value="NMR"/>
    <property type="chains" value="A=628-662"/>
</dbReference>
<dbReference type="PDB" id="2LSK">
    <property type="method" value="NMR"/>
    <property type="chains" value="B=524-539"/>
</dbReference>
<dbReference type="PDB" id="3JAA">
    <property type="method" value="EM"/>
    <property type="resolution" value="22.00 A"/>
    <property type="chains" value="A=1-432"/>
</dbReference>
<dbReference type="PDB" id="3MR2">
    <property type="method" value="X-ray"/>
    <property type="resolution" value="1.83 A"/>
    <property type="chains" value="A=1-432"/>
</dbReference>
<dbReference type="PDB" id="3MR3">
    <property type="method" value="X-ray"/>
    <property type="resolution" value="1.75 A"/>
    <property type="chains" value="A=1-432"/>
</dbReference>
<dbReference type="PDB" id="3MR5">
    <property type="method" value="X-ray"/>
    <property type="resolution" value="1.80 A"/>
    <property type="chains" value="A=1-432"/>
</dbReference>
<dbReference type="PDB" id="3MR6">
    <property type="method" value="X-ray"/>
    <property type="resolution" value="1.90 A"/>
    <property type="chains" value="A=1-432"/>
</dbReference>
<dbReference type="PDB" id="3SI8">
    <property type="method" value="X-ray"/>
    <property type="resolution" value="2.15 A"/>
    <property type="chains" value="A=1-432"/>
</dbReference>
<dbReference type="PDB" id="3TQ1">
    <property type="method" value="X-ray"/>
    <property type="resolution" value="2.56 A"/>
    <property type="chains" value="A=1-432"/>
</dbReference>
<dbReference type="PDB" id="3WUP">
    <property type="method" value="X-ray"/>
    <property type="resolution" value="1.60 A"/>
    <property type="chains" value="A=630-665"/>
</dbReference>
<dbReference type="PDB" id="4DL2">
    <property type="method" value="X-ray"/>
    <property type="resolution" value="2.15 A"/>
    <property type="chains" value="A=1-432"/>
</dbReference>
<dbReference type="PDB" id="4DL3">
    <property type="method" value="X-ray"/>
    <property type="resolution" value="2.10 A"/>
    <property type="chains" value="A=1-432"/>
</dbReference>
<dbReference type="PDB" id="4DL4">
    <property type="method" value="X-ray"/>
    <property type="resolution" value="2.00 A"/>
    <property type="chains" value="A=1-432"/>
</dbReference>
<dbReference type="PDB" id="4DL5">
    <property type="method" value="X-ray"/>
    <property type="resolution" value="2.92 A"/>
    <property type="chains" value="A=1-432"/>
</dbReference>
<dbReference type="PDB" id="4DL6">
    <property type="method" value="X-ray"/>
    <property type="resolution" value="2.50 A"/>
    <property type="chains" value="A=1-432"/>
</dbReference>
<dbReference type="PDB" id="4DL7">
    <property type="method" value="X-ray"/>
    <property type="resolution" value="1.97 A"/>
    <property type="chains" value="A=1-432"/>
</dbReference>
<dbReference type="PDB" id="4ECQ">
    <property type="method" value="X-ray"/>
    <property type="resolution" value="1.50 A"/>
    <property type="chains" value="A=1-432"/>
</dbReference>
<dbReference type="PDB" id="4ECR">
    <property type="method" value="X-ray"/>
    <property type="resolution" value="1.89 A"/>
    <property type="chains" value="A=1-432"/>
</dbReference>
<dbReference type="PDB" id="4ECS">
    <property type="method" value="X-ray"/>
    <property type="resolution" value="1.95 A"/>
    <property type="chains" value="A=1-432"/>
</dbReference>
<dbReference type="PDB" id="4ECT">
    <property type="method" value="X-ray"/>
    <property type="resolution" value="1.80 A"/>
    <property type="chains" value="A=1-432"/>
</dbReference>
<dbReference type="PDB" id="4ECU">
    <property type="method" value="X-ray"/>
    <property type="resolution" value="1.95 A"/>
    <property type="chains" value="A=1-432"/>
</dbReference>
<dbReference type="PDB" id="4ECV">
    <property type="method" value="X-ray"/>
    <property type="resolution" value="1.52 A"/>
    <property type="chains" value="A=1-432"/>
</dbReference>
<dbReference type="PDB" id="4ECW">
    <property type="method" value="X-ray"/>
    <property type="resolution" value="1.90 A"/>
    <property type="chains" value="A=1-432"/>
</dbReference>
<dbReference type="PDB" id="4ECX">
    <property type="method" value="X-ray"/>
    <property type="resolution" value="1.74 A"/>
    <property type="chains" value="A=1-432"/>
</dbReference>
<dbReference type="PDB" id="4ECY">
    <property type="method" value="X-ray"/>
    <property type="resolution" value="1.94 A"/>
    <property type="chains" value="A=1-432"/>
</dbReference>
<dbReference type="PDB" id="4ECZ">
    <property type="method" value="X-ray"/>
    <property type="resolution" value="1.83 A"/>
    <property type="chains" value="A=1-432"/>
</dbReference>
<dbReference type="PDB" id="4ED0">
    <property type="method" value="X-ray"/>
    <property type="resolution" value="1.65 A"/>
    <property type="chains" value="A=1-432"/>
</dbReference>
<dbReference type="PDB" id="4ED1">
    <property type="method" value="X-ray"/>
    <property type="resolution" value="1.81 A"/>
    <property type="chains" value="A=1-432"/>
</dbReference>
<dbReference type="PDB" id="4ED2">
    <property type="method" value="X-ray"/>
    <property type="resolution" value="1.71 A"/>
    <property type="chains" value="A=1-432"/>
</dbReference>
<dbReference type="PDB" id="4ED3">
    <property type="method" value="X-ray"/>
    <property type="resolution" value="1.79 A"/>
    <property type="chains" value="A=1-432"/>
</dbReference>
<dbReference type="PDB" id="4ED6">
    <property type="method" value="X-ray"/>
    <property type="resolution" value="2.21 A"/>
    <property type="chains" value="A=1-432"/>
</dbReference>
<dbReference type="PDB" id="4ED7">
    <property type="method" value="X-ray"/>
    <property type="resolution" value="1.72 A"/>
    <property type="chains" value="A=1-432"/>
</dbReference>
<dbReference type="PDB" id="4ED8">
    <property type="method" value="X-ray"/>
    <property type="resolution" value="1.52 A"/>
    <property type="chains" value="A=1-432"/>
</dbReference>
<dbReference type="PDB" id="4EEY">
    <property type="method" value="X-ray"/>
    <property type="resolution" value="2.32 A"/>
    <property type="chains" value="A=1-432"/>
</dbReference>
<dbReference type="PDB" id="4J9K">
    <property type="method" value="X-ray"/>
    <property type="resolution" value="2.03 A"/>
    <property type="chains" value="A=1-432"/>
</dbReference>
<dbReference type="PDB" id="4J9L">
    <property type="method" value="X-ray"/>
    <property type="resolution" value="1.85 A"/>
    <property type="chains" value="A=1-432"/>
</dbReference>
<dbReference type="PDB" id="4J9M">
    <property type="method" value="X-ray"/>
    <property type="resolution" value="2.25 A"/>
    <property type="chains" value="A=1-432"/>
</dbReference>
<dbReference type="PDB" id="4J9N">
    <property type="method" value="X-ray"/>
    <property type="resolution" value="1.96 A"/>
    <property type="chains" value="A=1-432"/>
</dbReference>
<dbReference type="PDB" id="4J9O">
    <property type="method" value="X-ray"/>
    <property type="resolution" value="2.60 A"/>
    <property type="chains" value="A=1-432"/>
</dbReference>
<dbReference type="PDB" id="4J9P">
    <property type="method" value="X-ray"/>
    <property type="resolution" value="2.30 A"/>
    <property type="chains" value="A=1-432"/>
</dbReference>
<dbReference type="PDB" id="4J9Q">
    <property type="method" value="X-ray"/>
    <property type="resolution" value="1.96 A"/>
    <property type="chains" value="A=1-432"/>
</dbReference>
<dbReference type="PDB" id="4J9R">
    <property type="method" value="X-ray"/>
    <property type="resolution" value="2.35 A"/>
    <property type="chains" value="A=1-432"/>
</dbReference>
<dbReference type="PDB" id="4J9S">
    <property type="method" value="X-ray"/>
    <property type="resolution" value="1.95 A"/>
    <property type="chains" value="A=1-432"/>
</dbReference>
<dbReference type="PDB" id="4O3N">
    <property type="method" value="X-ray"/>
    <property type="resolution" value="1.58 A"/>
    <property type="chains" value="A=1-432"/>
</dbReference>
<dbReference type="PDB" id="4O3O">
    <property type="method" value="X-ray"/>
    <property type="resolution" value="1.70 A"/>
    <property type="chains" value="A=1-432"/>
</dbReference>
<dbReference type="PDB" id="4O3P">
    <property type="method" value="X-ray"/>
    <property type="resolution" value="1.72 A"/>
    <property type="chains" value="A=1-432"/>
</dbReference>
<dbReference type="PDB" id="4O3Q">
    <property type="method" value="X-ray"/>
    <property type="resolution" value="1.72 A"/>
    <property type="chains" value="A=1-432"/>
</dbReference>
<dbReference type="PDB" id="4O3R">
    <property type="method" value="X-ray"/>
    <property type="resolution" value="1.62 A"/>
    <property type="chains" value="A=1-432"/>
</dbReference>
<dbReference type="PDB" id="4O3S">
    <property type="method" value="X-ray"/>
    <property type="resolution" value="1.72 A"/>
    <property type="chains" value="A=1-432"/>
</dbReference>
<dbReference type="PDB" id="4Q8E">
    <property type="method" value="X-ray"/>
    <property type="resolution" value="1.55 A"/>
    <property type="chains" value="A=1-432"/>
</dbReference>
<dbReference type="PDB" id="4Q8F">
    <property type="method" value="X-ray"/>
    <property type="resolution" value="2.80 A"/>
    <property type="chains" value="A=1-432"/>
</dbReference>
<dbReference type="PDB" id="4RNM">
    <property type="method" value="X-ray"/>
    <property type="resolution" value="2.14 A"/>
    <property type="chains" value="A=1-432"/>
</dbReference>
<dbReference type="PDB" id="4RNN">
    <property type="method" value="X-ray"/>
    <property type="resolution" value="1.81 A"/>
    <property type="chains" value="A=1-432"/>
</dbReference>
<dbReference type="PDB" id="4RNO">
    <property type="method" value="X-ray"/>
    <property type="resolution" value="2.82 A"/>
    <property type="chains" value="A=1-432"/>
</dbReference>
<dbReference type="PDB" id="4RU9">
    <property type="method" value="X-ray"/>
    <property type="resolution" value="2.65 A"/>
    <property type="chains" value="A=1-432"/>
</dbReference>
<dbReference type="PDB" id="4YP3">
    <property type="method" value="X-ray"/>
    <property type="resolution" value="1.89 A"/>
    <property type="chains" value="A=1-432"/>
</dbReference>
<dbReference type="PDB" id="4YQW">
    <property type="method" value="X-ray"/>
    <property type="resolution" value="2.06 A"/>
    <property type="chains" value="A=1-432"/>
</dbReference>
<dbReference type="PDB" id="4YR0">
    <property type="method" value="X-ray"/>
    <property type="resolution" value="1.78 A"/>
    <property type="chains" value="A=1-432"/>
</dbReference>
<dbReference type="PDB" id="4YR2">
    <property type="method" value="X-ray"/>
    <property type="resolution" value="1.95 A"/>
    <property type="chains" value="A=1-432"/>
</dbReference>
<dbReference type="PDB" id="4YR3">
    <property type="method" value="X-ray"/>
    <property type="resolution" value="2.00 A"/>
    <property type="chains" value="A=1-432"/>
</dbReference>
<dbReference type="PDB" id="5DG7">
    <property type="method" value="X-ray"/>
    <property type="resolution" value="2.26 A"/>
    <property type="chains" value="A=1-432"/>
</dbReference>
<dbReference type="PDB" id="5DG8">
    <property type="method" value="X-ray"/>
    <property type="resolution" value="2.12 A"/>
    <property type="chains" value="A=1-432"/>
</dbReference>
<dbReference type="PDB" id="5DG9">
    <property type="method" value="X-ray"/>
    <property type="resolution" value="2.15 A"/>
    <property type="chains" value="A=1-432"/>
</dbReference>
<dbReference type="PDB" id="5DGA">
    <property type="method" value="X-ray"/>
    <property type="resolution" value="2.30 A"/>
    <property type="chains" value="A=1-432"/>
</dbReference>
<dbReference type="PDB" id="5DGB">
    <property type="method" value="X-ray"/>
    <property type="resolution" value="1.79 A"/>
    <property type="chains" value="A=1-432"/>
</dbReference>
<dbReference type="PDB" id="5DLF">
    <property type="method" value="X-ray"/>
    <property type="resolution" value="1.97 A"/>
    <property type="chains" value="A=1-432"/>
</dbReference>
<dbReference type="PDB" id="5DLG">
    <property type="method" value="X-ray"/>
    <property type="resolution" value="2.35 A"/>
    <property type="chains" value="A=1-432"/>
</dbReference>
<dbReference type="PDB" id="5DQG">
    <property type="method" value="X-ray"/>
    <property type="resolution" value="2.29 A"/>
    <property type="chains" value="A=1-432"/>
</dbReference>
<dbReference type="PDB" id="5DQH">
    <property type="method" value="X-ray"/>
    <property type="resolution" value="1.99 A"/>
    <property type="chains" value="A=1-432"/>
</dbReference>
<dbReference type="PDB" id="5DQI">
    <property type="method" value="X-ray"/>
    <property type="resolution" value="2.30 A"/>
    <property type="chains" value="A=1-432"/>
</dbReference>
<dbReference type="PDB" id="5EWE">
    <property type="method" value="X-ray"/>
    <property type="resolution" value="1.66 A"/>
    <property type="chains" value="A=1-432"/>
</dbReference>
<dbReference type="PDB" id="5EWF">
    <property type="method" value="X-ray"/>
    <property type="resolution" value="1.78 A"/>
    <property type="chains" value="A=1-432"/>
</dbReference>
<dbReference type="PDB" id="5EWG">
    <property type="method" value="X-ray"/>
    <property type="resolution" value="1.75 A"/>
    <property type="chains" value="A=1-432"/>
</dbReference>
<dbReference type="PDB" id="5F9L">
    <property type="method" value="X-ray"/>
    <property type="resolution" value="2.59 A"/>
    <property type="chains" value="A=1-432"/>
</dbReference>
<dbReference type="PDB" id="5F9N">
    <property type="method" value="X-ray"/>
    <property type="resolution" value="2.23 A"/>
    <property type="chains" value="A=1-432"/>
</dbReference>
<dbReference type="PDB" id="5JUM">
    <property type="method" value="X-ray"/>
    <property type="resolution" value="2.60 A"/>
    <property type="chains" value="A=1-432"/>
</dbReference>
<dbReference type="PDB" id="5KFA">
    <property type="method" value="X-ray"/>
    <property type="resolution" value="1.51 A"/>
    <property type="chains" value="A=1-432"/>
</dbReference>
<dbReference type="PDB" id="5KFB">
    <property type="method" value="X-ray"/>
    <property type="resolution" value="1.55 A"/>
    <property type="chains" value="A=1-432"/>
</dbReference>
<dbReference type="PDB" id="5KFC">
    <property type="method" value="X-ray"/>
    <property type="resolution" value="1.50 A"/>
    <property type="chains" value="A=1-432"/>
</dbReference>
<dbReference type="PDB" id="5KFD">
    <property type="method" value="X-ray"/>
    <property type="resolution" value="1.65 A"/>
    <property type="chains" value="A=1-432"/>
</dbReference>
<dbReference type="PDB" id="5KFE">
    <property type="method" value="X-ray"/>
    <property type="resolution" value="1.55 A"/>
    <property type="chains" value="A=1-432"/>
</dbReference>
<dbReference type="PDB" id="5KFF">
    <property type="method" value="X-ray"/>
    <property type="resolution" value="1.70 A"/>
    <property type="chains" value="A=1-432"/>
</dbReference>
<dbReference type="PDB" id="5KFG">
    <property type="method" value="X-ray"/>
    <property type="resolution" value="1.55 A"/>
    <property type="chains" value="A=1-432"/>
</dbReference>
<dbReference type="PDB" id="5KFH">
    <property type="method" value="X-ray"/>
    <property type="resolution" value="1.72 A"/>
    <property type="chains" value="A=1-432"/>
</dbReference>
<dbReference type="PDB" id="5KFI">
    <property type="method" value="X-ray"/>
    <property type="resolution" value="1.65 A"/>
    <property type="chains" value="A=1-432"/>
</dbReference>
<dbReference type="PDB" id="5KFJ">
    <property type="method" value="X-ray"/>
    <property type="resolution" value="1.70 A"/>
    <property type="chains" value="A=1-432"/>
</dbReference>
<dbReference type="PDB" id="5KFK">
    <property type="method" value="X-ray"/>
    <property type="resolution" value="1.70 A"/>
    <property type="chains" value="A=1-432"/>
</dbReference>
<dbReference type="PDB" id="5KFL">
    <property type="method" value="X-ray"/>
    <property type="resolution" value="1.65 A"/>
    <property type="chains" value="A=1-432"/>
</dbReference>
<dbReference type="PDB" id="5KFM">
    <property type="method" value="X-ray"/>
    <property type="resolution" value="1.60 A"/>
    <property type="chains" value="A=1-432"/>
</dbReference>
<dbReference type="PDB" id="5KFN">
    <property type="method" value="X-ray"/>
    <property type="resolution" value="1.45 A"/>
    <property type="chains" value="A=1-432"/>
</dbReference>
<dbReference type="PDB" id="5KFO">
    <property type="method" value="X-ray"/>
    <property type="resolution" value="1.52 A"/>
    <property type="chains" value="A=1-432"/>
</dbReference>
<dbReference type="PDB" id="5KFP">
    <property type="method" value="X-ray"/>
    <property type="resolution" value="1.70 A"/>
    <property type="chains" value="A=1-432"/>
</dbReference>
<dbReference type="PDB" id="5KFQ">
    <property type="method" value="X-ray"/>
    <property type="resolution" value="1.55 A"/>
    <property type="chains" value="A=1-432"/>
</dbReference>
<dbReference type="PDB" id="5KFR">
    <property type="method" value="X-ray"/>
    <property type="resolution" value="1.75 A"/>
    <property type="chains" value="A=1-432"/>
</dbReference>
<dbReference type="PDB" id="5KFS">
    <property type="method" value="X-ray"/>
    <property type="resolution" value="1.46 A"/>
    <property type="chains" value="A=1-432"/>
</dbReference>
<dbReference type="PDB" id="5KFT">
    <property type="method" value="X-ray"/>
    <property type="resolution" value="1.52 A"/>
    <property type="chains" value="A=1-432"/>
</dbReference>
<dbReference type="PDB" id="5KFU">
    <property type="method" value="X-ray"/>
    <property type="resolution" value="1.55 A"/>
    <property type="chains" value="A=1-432"/>
</dbReference>
<dbReference type="PDB" id="5KFV">
    <property type="method" value="X-ray"/>
    <property type="resolution" value="1.60 A"/>
    <property type="chains" value="A=1-432"/>
</dbReference>
<dbReference type="PDB" id="5KFW">
    <property type="method" value="X-ray"/>
    <property type="resolution" value="1.62 A"/>
    <property type="chains" value="A=1-432"/>
</dbReference>
<dbReference type="PDB" id="5KFX">
    <property type="method" value="X-ray"/>
    <property type="resolution" value="1.52 A"/>
    <property type="chains" value="A=1-432"/>
</dbReference>
<dbReference type="PDB" id="5KFY">
    <property type="method" value="X-ray"/>
    <property type="resolution" value="1.70 A"/>
    <property type="chains" value="A=1-432"/>
</dbReference>
<dbReference type="PDB" id="5KFZ">
    <property type="method" value="X-ray"/>
    <property type="resolution" value="1.44 A"/>
    <property type="chains" value="A=1-432"/>
</dbReference>
<dbReference type="PDB" id="5KG0">
    <property type="method" value="X-ray"/>
    <property type="resolution" value="1.60 A"/>
    <property type="chains" value="A=1-432"/>
</dbReference>
<dbReference type="PDB" id="5KG1">
    <property type="method" value="X-ray"/>
    <property type="resolution" value="1.62 A"/>
    <property type="chains" value="A=1-432"/>
</dbReference>
<dbReference type="PDB" id="5KG2">
    <property type="method" value="X-ray"/>
    <property type="resolution" value="1.60 A"/>
    <property type="chains" value="A=1-432"/>
</dbReference>
<dbReference type="PDB" id="5KG3">
    <property type="method" value="X-ray"/>
    <property type="resolution" value="1.70 A"/>
    <property type="chains" value="A=1-432"/>
</dbReference>
<dbReference type="PDB" id="5KG4">
    <property type="method" value="X-ray"/>
    <property type="resolution" value="1.60 A"/>
    <property type="chains" value="A=1-432"/>
</dbReference>
<dbReference type="PDB" id="5KG5">
    <property type="method" value="X-ray"/>
    <property type="resolution" value="1.60 A"/>
    <property type="chains" value="A=1-432"/>
</dbReference>
<dbReference type="PDB" id="5KG6">
    <property type="method" value="X-ray"/>
    <property type="resolution" value="1.55 A"/>
    <property type="chains" value="A=1-432"/>
</dbReference>
<dbReference type="PDB" id="5KG7">
    <property type="method" value="X-ray"/>
    <property type="resolution" value="1.75 A"/>
    <property type="chains" value="A=1-432"/>
</dbReference>
<dbReference type="PDB" id="5L1I">
    <property type="method" value="X-ray"/>
    <property type="resolution" value="2.78 A"/>
    <property type="chains" value="A=1-432"/>
</dbReference>
<dbReference type="PDB" id="5L1J">
    <property type="method" value="X-ray"/>
    <property type="resolution" value="1.94 A"/>
    <property type="chains" value="A=1-432"/>
</dbReference>
<dbReference type="PDB" id="5L1K">
    <property type="method" value="X-ray"/>
    <property type="resolution" value="1.82 A"/>
    <property type="chains" value="A=1-432"/>
</dbReference>
<dbReference type="PDB" id="5L1L">
    <property type="method" value="X-ray"/>
    <property type="resolution" value="1.62 A"/>
    <property type="chains" value="A=1-432"/>
</dbReference>
<dbReference type="PDB" id="5L9X">
    <property type="method" value="X-ray"/>
    <property type="resolution" value="1.90 A"/>
    <property type="chains" value="A=1-432"/>
</dbReference>
<dbReference type="PDB" id="6D0M">
    <property type="method" value="X-ray"/>
    <property type="resolution" value="1.83 A"/>
    <property type="chains" value="A=1-432"/>
</dbReference>
<dbReference type="PDB" id="6D0Z">
    <property type="method" value="X-ray"/>
    <property type="resolution" value="1.75 A"/>
    <property type="chains" value="A=1-432"/>
</dbReference>
<dbReference type="PDB" id="6M7O">
    <property type="method" value="X-ray"/>
    <property type="resolution" value="3.00 A"/>
    <property type="chains" value="A=1-432"/>
</dbReference>
<dbReference type="PDB" id="6M7P">
    <property type="method" value="X-ray"/>
    <property type="resolution" value="1.75 A"/>
    <property type="chains" value="A=1-432"/>
</dbReference>
<dbReference type="PDB" id="6M7T">
    <property type="method" value="X-ray"/>
    <property type="resolution" value="2.80 A"/>
    <property type="chains" value="A=1-432"/>
</dbReference>
<dbReference type="PDB" id="6M7U">
    <property type="method" value="X-ray"/>
    <property type="resolution" value="3.40 A"/>
    <property type="chains" value="A=1-432"/>
</dbReference>
<dbReference type="PDB" id="6M7V">
    <property type="method" value="X-ray"/>
    <property type="resolution" value="3.06 A"/>
    <property type="chains" value="A=1-432"/>
</dbReference>
<dbReference type="PDB" id="6MP3">
    <property type="method" value="X-ray"/>
    <property type="resolution" value="1.91 A"/>
    <property type="chains" value="A=1-432"/>
</dbReference>
<dbReference type="PDB" id="6MQ8">
    <property type="method" value="X-ray"/>
    <property type="resolution" value="1.97 A"/>
    <property type="chains" value="A=3-432"/>
</dbReference>
<dbReference type="PDB" id="6MXO">
    <property type="method" value="X-ray"/>
    <property type="resolution" value="2.04 A"/>
    <property type="chains" value="A=3-435"/>
</dbReference>
<dbReference type="PDB" id="6PL7">
    <property type="method" value="X-ray"/>
    <property type="resolution" value="2.50 A"/>
    <property type="chains" value="A=1-432"/>
</dbReference>
<dbReference type="PDB" id="6PL8">
    <property type="method" value="X-ray"/>
    <property type="resolution" value="2.17 A"/>
    <property type="chains" value="A=1-432"/>
</dbReference>
<dbReference type="PDB" id="6PLC">
    <property type="method" value="X-ray"/>
    <property type="resolution" value="2.50 A"/>
    <property type="chains" value="A=1-432"/>
</dbReference>
<dbReference type="PDB" id="6PZ3">
    <property type="method" value="X-ray"/>
    <property type="resolution" value="2.40 A"/>
    <property type="chains" value="A=1-432"/>
</dbReference>
<dbReference type="PDB" id="6Q02">
    <property type="method" value="X-ray"/>
    <property type="resolution" value="2.09 A"/>
    <property type="chains" value="A=1-432"/>
</dbReference>
<dbReference type="PDB" id="6UI2">
    <property type="method" value="X-ray"/>
    <property type="resolution" value="2.35 A"/>
    <property type="chains" value="A=1-432"/>
</dbReference>
<dbReference type="PDB" id="6UQI">
    <property type="method" value="X-ray"/>
    <property type="resolution" value="2.50 A"/>
    <property type="chains" value="A=1-432"/>
</dbReference>
<dbReference type="PDB" id="6V5K">
    <property type="method" value="X-ray"/>
    <property type="resolution" value="2.69 A"/>
    <property type="chains" value="A=1-432"/>
</dbReference>
<dbReference type="PDB" id="6W5X">
    <property type="method" value="X-ray"/>
    <property type="resolution" value="2.59 A"/>
    <property type="chains" value="A=1-432"/>
</dbReference>
<dbReference type="PDB" id="6WK6">
    <property type="method" value="X-ray"/>
    <property type="resolution" value="2.35 A"/>
    <property type="chains" value="A=1-432"/>
</dbReference>
<dbReference type="PDB" id="7L69">
    <property type="method" value="X-ray"/>
    <property type="resolution" value="1.91 A"/>
    <property type="chains" value="A=1-432"/>
</dbReference>
<dbReference type="PDB" id="7LCD">
    <property type="method" value="X-ray"/>
    <property type="resolution" value="1.98 A"/>
    <property type="chains" value="A=1-432"/>
</dbReference>
<dbReference type="PDB" id="7M7L">
    <property type="method" value="X-ray"/>
    <property type="resolution" value="1.58 A"/>
    <property type="chains" value="A=1-432"/>
</dbReference>
<dbReference type="PDB" id="7M7M">
    <property type="method" value="X-ray"/>
    <property type="resolution" value="1.46 A"/>
    <property type="chains" value="A=1-432"/>
</dbReference>
<dbReference type="PDB" id="7M7N">
    <property type="method" value="X-ray"/>
    <property type="resolution" value="1.31 A"/>
    <property type="chains" value="A=1-432"/>
</dbReference>
<dbReference type="PDB" id="7M7O">
    <property type="method" value="X-ray"/>
    <property type="resolution" value="1.80 A"/>
    <property type="chains" value="A=1-432"/>
</dbReference>
<dbReference type="PDB" id="7M7P">
    <property type="method" value="X-ray"/>
    <property type="resolution" value="1.80 A"/>
    <property type="chains" value="A=1-432"/>
</dbReference>
<dbReference type="PDB" id="7M7Q">
    <property type="method" value="X-ray"/>
    <property type="resolution" value="2.27 A"/>
    <property type="chains" value="A=1-432"/>
</dbReference>
<dbReference type="PDB" id="7M7R">
    <property type="method" value="X-ray"/>
    <property type="resolution" value="1.81 A"/>
    <property type="chains" value="A=1-432"/>
</dbReference>
<dbReference type="PDB" id="7M7S">
    <property type="method" value="X-ray"/>
    <property type="resolution" value="1.85 A"/>
    <property type="chains" value="A=1-432"/>
</dbReference>
<dbReference type="PDB" id="7M7T">
    <property type="method" value="X-ray"/>
    <property type="resolution" value="1.46 A"/>
    <property type="chains" value="A=1-432"/>
</dbReference>
<dbReference type="PDB" id="7M7U">
    <property type="method" value="X-ray"/>
    <property type="resolution" value="1.94 A"/>
    <property type="chains" value="A=1-432"/>
</dbReference>
<dbReference type="PDB" id="7M7Y">
    <property type="method" value="X-ray"/>
    <property type="resolution" value="1.80 A"/>
    <property type="chains" value="A=1-432"/>
</dbReference>
<dbReference type="PDB" id="7M7Z">
    <property type="method" value="X-ray"/>
    <property type="resolution" value="1.82 A"/>
    <property type="chains" value="A=1-432"/>
</dbReference>
<dbReference type="PDB" id="7M80">
    <property type="method" value="X-ray"/>
    <property type="resolution" value="1.98 A"/>
    <property type="chains" value="A=1-432"/>
</dbReference>
<dbReference type="PDB" id="7M81">
    <property type="method" value="X-ray"/>
    <property type="resolution" value="2.05 A"/>
    <property type="chains" value="A=1-432"/>
</dbReference>
<dbReference type="PDB" id="7M82">
    <property type="method" value="X-ray"/>
    <property type="resolution" value="2.07 A"/>
    <property type="chains" value="A=1-432"/>
</dbReference>
<dbReference type="PDB" id="7M83">
    <property type="method" value="X-ray"/>
    <property type="resolution" value="1.55 A"/>
    <property type="chains" value="A=1-432"/>
</dbReference>
<dbReference type="PDB" id="7M84">
    <property type="method" value="X-ray"/>
    <property type="resolution" value="1.47 A"/>
    <property type="chains" value="A=1-432"/>
</dbReference>
<dbReference type="PDB" id="7M85">
    <property type="method" value="X-ray"/>
    <property type="resolution" value="1.75 A"/>
    <property type="chains" value="A=1-432"/>
</dbReference>
<dbReference type="PDB" id="7M86">
    <property type="method" value="X-ray"/>
    <property type="resolution" value="1.55 A"/>
    <property type="chains" value="A=1-432"/>
</dbReference>
<dbReference type="PDB" id="7M87">
    <property type="method" value="X-ray"/>
    <property type="resolution" value="1.85 A"/>
    <property type="chains" value="A=1-432"/>
</dbReference>
<dbReference type="PDB" id="7M88">
    <property type="method" value="X-ray"/>
    <property type="resolution" value="1.66 A"/>
    <property type="chains" value="A=1-432"/>
</dbReference>
<dbReference type="PDB" id="7M89">
    <property type="method" value="X-ray"/>
    <property type="resolution" value="1.83 A"/>
    <property type="chains" value="A=1-432"/>
</dbReference>
<dbReference type="PDB" id="7M8A">
    <property type="method" value="X-ray"/>
    <property type="resolution" value="1.91 A"/>
    <property type="chains" value="A=1-432"/>
</dbReference>
<dbReference type="PDB" id="7M8B">
    <property type="method" value="X-ray"/>
    <property type="resolution" value="1.85 A"/>
    <property type="chains" value="A=1-432"/>
</dbReference>
<dbReference type="PDB" id="7M8C">
    <property type="method" value="X-ray"/>
    <property type="resolution" value="1.85 A"/>
    <property type="chains" value="A=1-432"/>
</dbReference>
<dbReference type="PDB" id="7M8D">
    <property type="method" value="X-ray"/>
    <property type="resolution" value="1.92 A"/>
    <property type="chains" value="A=1-432"/>
</dbReference>
<dbReference type="PDB" id="7U72">
    <property type="method" value="X-ray"/>
    <property type="resolution" value="1.53 A"/>
    <property type="chains" value="A=1-432"/>
</dbReference>
<dbReference type="PDB" id="7U73">
    <property type="method" value="X-ray"/>
    <property type="resolution" value="1.56 A"/>
    <property type="chains" value="A=1-432"/>
</dbReference>
<dbReference type="PDB" id="7U74">
    <property type="method" value="X-ray"/>
    <property type="resolution" value="1.52 A"/>
    <property type="chains" value="A=1-432"/>
</dbReference>
<dbReference type="PDB" id="7U75">
    <property type="method" value="X-ray"/>
    <property type="resolution" value="1.55 A"/>
    <property type="chains" value="A=1-432"/>
</dbReference>
<dbReference type="PDB" id="7U76">
    <property type="method" value="X-ray"/>
    <property type="resolution" value="1.69 A"/>
    <property type="chains" value="A=1-432"/>
</dbReference>
<dbReference type="PDB" id="7U77">
    <property type="method" value="X-ray"/>
    <property type="resolution" value="1.58 A"/>
    <property type="chains" value="A=1-432"/>
</dbReference>
<dbReference type="PDB" id="7U78">
    <property type="method" value="X-ray"/>
    <property type="resolution" value="1.61 A"/>
    <property type="chains" value="A=1-432"/>
</dbReference>
<dbReference type="PDB" id="7U79">
    <property type="method" value="X-ray"/>
    <property type="resolution" value="1.69 A"/>
    <property type="chains" value="A=1-432"/>
</dbReference>
<dbReference type="PDB" id="7U7A">
    <property type="method" value="X-ray"/>
    <property type="resolution" value="1.58 A"/>
    <property type="chains" value="A=1-432"/>
</dbReference>
<dbReference type="PDB" id="7U7B">
    <property type="method" value="X-ray"/>
    <property type="resolution" value="1.58 A"/>
    <property type="chains" value="A=1-432"/>
</dbReference>
<dbReference type="PDB" id="7U7C">
    <property type="method" value="X-ray"/>
    <property type="resolution" value="1.55 A"/>
    <property type="chains" value="A=1-432"/>
</dbReference>
<dbReference type="PDB" id="7U7D">
    <property type="method" value="X-ray"/>
    <property type="resolution" value="1.57 A"/>
    <property type="chains" value="A=1-432"/>
</dbReference>
<dbReference type="PDB" id="7U7E">
    <property type="method" value="X-ray"/>
    <property type="resolution" value="1.58 A"/>
    <property type="chains" value="A=1-432"/>
</dbReference>
<dbReference type="PDB" id="7U7F">
    <property type="method" value="X-ray"/>
    <property type="resolution" value="1.65 A"/>
    <property type="chains" value="A=1-432"/>
</dbReference>
<dbReference type="PDB" id="7U7G">
    <property type="method" value="X-ray"/>
    <property type="resolution" value="1.77 A"/>
    <property type="chains" value="A=1-432"/>
</dbReference>
<dbReference type="PDB" id="7U7I">
    <property type="method" value="X-ray"/>
    <property type="resolution" value="1.57 A"/>
    <property type="chains" value="A=1-432"/>
</dbReference>
<dbReference type="PDB" id="7U7J">
    <property type="method" value="X-ray"/>
    <property type="resolution" value="1.58 A"/>
    <property type="chains" value="A=1-432"/>
</dbReference>
<dbReference type="PDB" id="7U7K">
    <property type="method" value="X-ray"/>
    <property type="resolution" value="1.67 A"/>
    <property type="chains" value="A=1-432"/>
</dbReference>
<dbReference type="PDB" id="7U7L">
    <property type="method" value="X-ray"/>
    <property type="resolution" value="1.47 A"/>
    <property type="chains" value="A=1-432"/>
</dbReference>
<dbReference type="PDB" id="7U7R">
    <property type="method" value="X-ray"/>
    <property type="resolution" value="1.64 A"/>
    <property type="chains" value="A=1-432"/>
</dbReference>
<dbReference type="PDB" id="7U7S">
    <property type="method" value="X-ray"/>
    <property type="resolution" value="1.60 A"/>
    <property type="chains" value="A=1-432"/>
</dbReference>
<dbReference type="PDB" id="7U7T">
    <property type="method" value="X-ray"/>
    <property type="resolution" value="1.55 A"/>
    <property type="chains" value="A=1-432"/>
</dbReference>
<dbReference type="PDB" id="7U7U">
    <property type="method" value="X-ray"/>
    <property type="resolution" value="1.54 A"/>
    <property type="chains" value="A=1-432"/>
</dbReference>
<dbReference type="PDB" id="7U7V">
    <property type="method" value="X-ray"/>
    <property type="resolution" value="1.65 A"/>
    <property type="chains" value="A=1-432"/>
</dbReference>
<dbReference type="PDB" id="7U7W">
    <property type="method" value="X-ray"/>
    <property type="resolution" value="1.66 A"/>
    <property type="chains" value="A=1-432"/>
</dbReference>
<dbReference type="PDB" id="7U7X">
    <property type="method" value="X-ray"/>
    <property type="resolution" value="1.65 A"/>
    <property type="chains" value="A=1-432"/>
</dbReference>
<dbReference type="PDB" id="7U7Y">
    <property type="method" value="X-ray"/>
    <property type="resolution" value="1.78 A"/>
    <property type="chains" value="A=1-432"/>
</dbReference>
<dbReference type="PDB" id="7U7Z">
    <property type="method" value="X-ray"/>
    <property type="resolution" value="1.67 A"/>
    <property type="chains" value="A=1-432"/>
</dbReference>
<dbReference type="PDB" id="7U80">
    <property type="method" value="X-ray"/>
    <property type="resolution" value="1.83 A"/>
    <property type="chains" value="A=1-432"/>
</dbReference>
<dbReference type="PDB" id="7U81">
    <property type="method" value="X-ray"/>
    <property type="resolution" value="1.60 A"/>
    <property type="chains" value="A=1-432"/>
</dbReference>
<dbReference type="PDB" id="7U82">
    <property type="method" value="X-ray"/>
    <property type="resolution" value="1.55 A"/>
    <property type="chains" value="A=1-432"/>
</dbReference>
<dbReference type="PDB" id="7U83">
    <property type="method" value="X-ray"/>
    <property type="resolution" value="1.55 A"/>
    <property type="chains" value="A=1-432"/>
</dbReference>
<dbReference type="PDB" id="7U84">
    <property type="method" value="X-ray"/>
    <property type="resolution" value="1.71 A"/>
    <property type="chains" value="A=1-432"/>
</dbReference>
<dbReference type="PDB" id="8E85">
    <property type="method" value="X-ray"/>
    <property type="resolution" value="1.72 A"/>
    <property type="chains" value="A=1-432"/>
</dbReference>
<dbReference type="PDB" id="8E86">
    <property type="method" value="X-ray"/>
    <property type="resolution" value="1.78 A"/>
    <property type="chains" value="A=1-432"/>
</dbReference>
<dbReference type="PDB" id="8E87">
    <property type="method" value="X-ray"/>
    <property type="resolution" value="2.19 A"/>
    <property type="chains" value="A=1-432"/>
</dbReference>
<dbReference type="PDB" id="8E88">
    <property type="method" value="X-ray"/>
    <property type="resolution" value="2.40 A"/>
    <property type="chains" value="A=1-432"/>
</dbReference>
<dbReference type="PDB" id="8E89">
    <property type="method" value="X-ray"/>
    <property type="resolution" value="2.20 A"/>
    <property type="chains" value="A=1-432"/>
</dbReference>
<dbReference type="PDB" id="8E8A">
    <property type="method" value="X-ray"/>
    <property type="resolution" value="1.80 A"/>
    <property type="chains" value="A=1-432"/>
</dbReference>
<dbReference type="PDB" id="8E8B">
    <property type="method" value="X-ray"/>
    <property type="resolution" value="2.20 A"/>
    <property type="chains" value="A=1-432"/>
</dbReference>
<dbReference type="PDB" id="8E8C">
    <property type="method" value="X-ray"/>
    <property type="resolution" value="2.25 A"/>
    <property type="chains" value="A=1-432"/>
</dbReference>
<dbReference type="PDB" id="8E8D">
    <property type="method" value="X-ray"/>
    <property type="resolution" value="2.09 A"/>
    <property type="chains" value="A=1-432"/>
</dbReference>
<dbReference type="PDB" id="8E8E">
    <property type="method" value="X-ray"/>
    <property type="resolution" value="2.05 A"/>
    <property type="chains" value="A=1-432"/>
</dbReference>
<dbReference type="PDB" id="8E8F">
    <property type="method" value="X-ray"/>
    <property type="resolution" value="2.14 A"/>
    <property type="chains" value="A=1-432"/>
</dbReference>
<dbReference type="PDB" id="8E8G">
    <property type="method" value="X-ray"/>
    <property type="resolution" value="2.13 A"/>
    <property type="chains" value="A=1-432"/>
</dbReference>
<dbReference type="PDB" id="8E8H">
    <property type="method" value="X-ray"/>
    <property type="resolution" value="2.13 A"/>
    <property type="chains" value="A=1-432"/>
</dbReference>
<dbReference type="PDB" id="8E8J">
    <property type="method" value="X-ray"/>
    <property type="resolution" value="2.40 A"/>
    <property type="chains" value="A=1-432"/>
</dbReference>
<dbReference type="PDB" id="8E8K">
    <property type="method" value="X-ray"/>
    <property type="resolution" value="2.40 A"/>
    <property type="chains" value="A=1-432"/>
</dbReference>
<dbReference type="PDB" id="8EVE">
    <property type="method" value="X-ray"/>
    <property type="resolution" value="2.35 A"/>
    <property type="chains" value="A=1-432"/>
</dbReference>
<dbReference type="PDB" id="8EVF">
    <property type="method" value="X-ray"/>
    <property type="resolution" value="2.87 A"/>
    <property type="chains" value="A=1-432"/>
</dbReference>
<dbReference type="PDB" id="8FN3">
    <property type="method" value="X-ray"/>
    <property type="resolution" value="2.17 A"/>
    <property type="chains" value="A=1-432"/>
</dbReference>
<dbReference type="PDB" id="8FOG">
    <property type="method" value="X-ray"/>
    <property type="resolution" value="2.29 A"/>
    <property type="chains" value="A=1-432"/>
</dbReference>
<dbReference type="PDB" id="8G8H">
    <property type="method" value="X-ray"/>
    <property type="resolution" value="1.64 A"/>
    <property type="chains" value="A=1-432"/>
</dbReference>
<dbReference type="PDB" id="8G8J">
    <property type="method" value="X-ray"/>
    <property type="resolution" value="1.74 A"/>
    <property type="chains" value="A=1-432"/>
</dbReference>
<dbReference type="PDB" id="8GBF">
    <property type="method" value="X-ray"/>
    <property type="resolution" value="2.11 A"/>
    <property type="chains" value="A=1-432"/>
</dbReference>
<dbReference type="PDB" id="8GKR">
    <property type="method" value="X-ray"/>
    <property type="resolution" value="2.78 A"/>
    <property type="chains" value="A=1-432"/>
</dbReference>
<dbReference type="PDB" id="8GML">
    <property type="method" value="X-ray"/>
    <property type="resolution" value="2.57 A"/>
    <property type="chains" value="A=1-432"/>
</dbReference>
<dbReference type="PDB" id="8SKI">
    <property type="method" value="X-ray"/>
    <property type="resolution" value="2.16 A"/>
    <property type="chains" value="A=1-432"/>
</dbReference>
<dbReference type="PDB" id="8UJT">
    <property type="method" value="X-ray"/>
    <property type="resolution" value="2.31 A"/>
    <property type="chains" value="A=1-432"/>
</dbReference>
<dbReference type="PDB" id="8UJV">
    <property type="method" value="X-ray"/>
    <property type="resolution" value="2.23 A"/>
    <property type="chains" value="A=1-432"/>
</dbReference>
<dbReference type="PDB" id="8UJX">
    <property type="method" value="X-ray"/>
    <property type="resolution" value="2.17 A"/>
    <property type="chains" value="A=1-432"/>
</dbReference>
<dbReference type="PDB" id="8UK4">
    <property type="method" value="X-ray"/>
    <property type="resolution" value="3.02 A"/>
    <property type="chains" value="A=1-432"/>
</dbReference>
<dbReference type="PDB" id="8V7A">
    <property type="method" value="X-ray"/>
    <property type="resolution" value="1.95 A"/>
    <property type="chains" value="A=1-432"/>
</dbReference>
<dbReference type="PDB" id="8V7B">
    <property type="method" value="X-ray"/>
    <property type="resolution" value="1.90 A"/>
    <property type="chains" value="A=1-432"/>
</dbReference>
<dbReference type="PDB" id="8V7C">
    <property type="method" value="X-ray"/>
    <property type="resolution" value="1.79 A"/>
    <property type="chains" value="A=1-432"/>
</dbReference>
<dbReference type="PDB" id="8V7D">
    <property type="method" value="X-ray"/>
    <property type="resolution" value="1.95 A"/>
    <property type="chains" value="A=1-432"/>
</dbReference>
<dbReference type="PDB" id="8V7E">
    <property type="method" value="X-ray"/>
    <property type="resolution" value="1.82 A"/>
    <property type="chains" value="A=1-432"/>
</dbReference>
<dbReference type="PDB" id="8V7F">
    <property type="method" value="X-ray"/>
    <property type="resolution" value="2.20 A"/>
    <property type="chains" value="A=1-432"/>
</dbReference>
<dbReference type="PDB" id="8V7G">
    <property type="method" value="X-ray"/>
    <property type="resolution" value="1.52 A"/>
    <property type="chains" value="A=1-432"/>
</dbReference>
<dbReference type="PDB" id="8V7H">
    <property type="method" value="X-ray"/>
    <property type="resolution" value="1.68 A"/>
    <property type="chains" value="A=1-432"/>
</dbReference>
<dbReference type="PDB" id="8V7I">
    <property type="method" value="X-ray"/>
    <property type="resolution" value="1.72 A"/>
    <property type="chains" value="A=1-432"/>
</dbReference>
<dbReference type="PDB" id="8V7J">
    <property type="method" value="X-ray"/>
    <property type="resolution" value="1.66 A"/>
    <property type="chains" value="A=1-432"/>
</dbReference>
<dbReference type="PDB" id="8V7K">
    <property type="method" value="X-ray"/>
    <property type="resolution" value="1.65 A"/>
    <property type="chains" value="A=1-432"/>
</dbReference>
<dbReference type="PDB" id="9CHW">
    <property type="method" value="X-ray"/>
    <property type="resolution" value="2.16 A"/>
    <property type="chains" value="A=1-432"/>
</dbReference>
<dbReference type="PDB" id="9CI9">
    <property type="method" value="X-ray"/>
    <property type="resolution" value="2.09 A"/>
    <property type="chains" value="A=1-432"/>
</dbReference>
<dbReference type="PDB" id="9CIH">
    <property type="method" value="X-ray"/>
    <property type="resolution" value="2.15 A"/>
    <property type="chains" value="A=1-432"/>
</dbReference>
<dbReference type="PDB" id="9CIQ">
    <property type="method" value="X-ray"/>
    <property type="resolution" value="2.80 A"/>
    <property type="chains" value="A=1-432"/>
</dbReference>
<dbReference type="PDB" id="9CJ9">
    <property type="method" value="X-ray"/>
    <property type="resolution" value="2.98 A"/>
    <property type="chains" value="A=1-432"/>
</dbReference>
<dbReference type="PDBsum" id="2I5O"/>
<dbReference type="PDBsum" id="2LSK"/>
<dbReference type="PDBsum" id="3JAA"/>
<dbReference type="PDBsum" id="3MR2"/>
<dbReference type="PDBsum" id="3MR3"/>
<dbReference type="PDBsum" id="3MR5"/>
<dbReference type="PDBsum" id="3MR6"/>
<dbReference type="PDBsum" id="3SI8"/>
<dbReference type="PDBsum" id="3TQ1"/>
<dbReference type="PDBsum" id="3WUP"/>
<dbReference type="PDBsum" id="4DL2"/>
<dbReference type="PDBsum" id="4DL3"/>
<dbReference type="PDBsum" id="4DL4"/>
<dbReference type="PDBsum" id="4DL5"/>
<dbReference type="PDBsum" id="4DL6"/>
<dbReference type="PDBsum" id="4DL7"/>
<dbReference type="PDBsum" id="4ECQ"/>
<dbReference type="PDBsum" id="4ECR"/>
<dbReference type="PDBsum" id="4ECS"/>
<dbReference type="PDBsum" id="4ECT"/>
<dbReference type="PDBsum" id="4ECU"/>
<dbReference type="PDBsum" id="4ECV"/>
<dbReference type="PDBsum" id="4ECW"/>
<dbReference type="PDBsum" id="4ECX"/>
<dbReference type="PDBsum" id="4ECY"/>
<dbReference type="PDBsum" id="4ECZ"/>
<dbReference type="PDBsum" id="4ED0"/>
<dbReference type="PDBsum" id="4ED1"/>
<dbReference type="PDBsum" id="4ED2"/>
<dbReference type="PDBsum" id="4ED3"/>
<dbReference type="PDBsum" id="4ED6"/>
<dbReference type="PDBsum" id="4ED7"/>
<dbReference type="PDBsum" id="4ED8"/>
<dbReference type="PDBsum" id="4EEY"/>
<dbReference type="PDBsum" id="4J9K"/>
<dbReference type="PDBsum" id="4J9L"/>
<dbReference type="PDBsum" id="4J9M"/>
<dbReference type="PDBsum" id="4J9N"/>
<dbReference type="PDBsum" id="4J9O"/>
<dbReference type="PDBsum" id="4J9P"/>
<dbReference type="PDBsum" id="4J9Q"/>
<dbReference type="PDBsum" id="4J9R"/>
<dbReference type="PDBsum" id="4J9S"/>
<dbReference type="PDBsum" id="4O3N"/>
<dbReference type="PDBsum" id="4O3O"/>
<dbReference type="PDBsum" id="4O3P"/>
<dbReference type="PDBsum" id="4O3Q"/>
<dbReference type="PDBsum" id="4O3R"/>
<dbReference type="PDBsum" id="4O3S"/>
<dbReference type="PDBsum" id="4Q8E"/>
<dbReference type="PDBsum" id="4Q8F"/>
<dbReference type="PDBsum" id="4RNM"/>
<dbReference type="PDBsum" id="4RNN"/>
<dbReference type="PDBsum" id="4RNO"/>
<dbReference type="PDBsum" id="4RU9"/>
<dbReference type="PDBsum" id="4YP3"/>
<dbReference type="PDBsum" id="4YQW"/>
<dbReference type="PDBsum" id="4YR0"/>
<dbReference type="PDBsum" id="4YR2"/>
<dbReference type="PDBsum" id="4YR3"/>
<dbReference type="PDBsum" id="5DG7"/>
<dbReference type="PDBsum" id="5DG8"/>
<dbReference type="PDBsum" id="5DG9"/>
<dbReference type="PDBsum" id="5DGA"/>
<dbReference type="PDBsum" id="5DGB"/>
<dbReference type="PDBsum" id="5DLF"/>
<dbReference type="PDBsum" id="5DLG"/>
<dbReference type="PDBsum" id="5DQG"/>
<dbReference type="PDBsum" id="5DQH"/>
<dbReference type="PDBsum" id="5DQI"/>
<dbReference type="PDBsum" id="5EWE"/>
<dbReference type="PDBsum" id="5EWF"/>
<dbReference type="PDBsum" id="5EWG"/>
<dbReference type="PDBsum" id="5F9L"/>
<dbReference type="PDBsum" id="5F9N"/>
<dbReference type="PDBsum" id="5JUM"/>
<dbReference type="PDBsum" id="5KFA"/>
<dbReference type="PDBsum" id="5KFB"/>
<dbReference type="PDBsum" id="5KFC"/>
<dbReference type="PDBsum" id="5KFD"/>
<dbReference type="PDBsum" id="5KFE"/>
<dbReference type="PDBsum" id="5KFF"/>
<dbReference type="PDBsum" id="5KFG"/>
<dbReference type="PDBsum" id="5KFH"/>
<dbReference type="PDBsum" id="5KFI"/>
<dbReference type="PDBsum" id="5KFJ"/>
<dbReference type="PDBsum" id="5KFK"/>
<dbReference type="PDBsum" id="5KFL"/>
<dbReference type="PDBsum" id="5KFM"/>
<dbReference type="PDBsum" id="5KFN"/>
<dbReference type="PDBsum" id="5KFO"/>
<dbReference type="PDBsum" id="5KFP"/>
<dbReference type="PDBsum" id="5KFQ"/>
<dbReference type="PDBsum" id="5KFR"/>
<dbReference type="PDBsum" id="5KFS"/>
<dbReference type="PDBsum" id="5KFT"/>
<dbReference type="PDBsum" id="5KFU"/>
<dbReference type="PDBsum" id="5KFV"/>
<dbReference type="PDBsum" id="5KFW"/>
<dbReference type="PDBsum" id="5KFX"/>
<dbReference type="PDBsum" id="5KFY"/>
<dbReference type="PDBsum" id="5KFZ"/>
<dbReference type="PDBsum" id="5KG0"/>
<dbReference type="PDBsum" id="5KG1"/>
<dbReference type="PDBsum" id="5KG2"/>
<dbReference type="PDBsum" id="5KG3"/>
<dbReference type="PDBsum" id="5KG4"/>
<dbReference type="PDBsum" id="5KG5"/>
<dbReference type="PDBsum" id="5KG6"/>
<dbReference type="PDBsum" id="5KG7"/>
<dbReference type="PDBsum" id="5L1I"/>
<dbReference type="PDBsum" id="5L1J"/>
<dbReference type="PDBsum" id="5L1K"/>
<dbReference type="PDBsum" id="5L1L"/>
<dbReference type="PDBsum" id="5L9X"/>
<dbReference type="PDBsum" id="6D0M"/>
<dbReference type="PDBsum" id="6D0Z"/>
<dbReference type="PDBsum" id="6M7O"/>
<dbReference type="PDBsum" id="6M7P"/>
<dbReference type="PDBsum" id="6M7T"/>
<dbReference type="PDBsum" id="6M7U"/>
<dbReference type="PDBsum" id="6M7V"/>
<dbReference type="PDBsum" id="6MP3"/>
<dbReference type="PDBsum" id="6MQ8"/>
<dbReference type="PDBsum" id="6MXO"/>
<dbReference type="PDBsum" id="6PL7"/>
<dbReference type="PDBsum" id="6PL8"/>
<dbReference type="PDBsum" id="6PLC"/>
<dbReference type="PDBsum" id="6PZ3"/>
<dbReference type="PDBsum" id="6Q02"/>
<dbReference type="PDBsum" id="6UI2"/>
<dbReference type="PDBsum" id="6UQI"/>
<dbReference type="PDBsum" id="6V5K"/>
<dbReference type="PDBsum" id="6W5X"/>
<dbReference type="PDBsum" id="6WK6"/>
<dbReference type="PDBsum" id="7L69"/>
<dbReference type="PDBsum" id="7LCD"/>
<dbReference type="PDBsum" id="7M7L"/>
<dbReference type="PDBsum" id="7M7M"/>
<dbReference type="PDBsum" id="7M7N"/>
<dbReference type="PDBsum" id="7M7O"/>
<dbReference type="PDBsum" id="7M7P"/>
<dbReference type="PDBsum" id="7M7Q"/>
<dbReference type="PDBsum" id="7M7R"/>
<dbReference type="PDBsum" id="7M7S"/>
<dbReference type="PDBsum" id="7M7T"/>
<dbReference type="PDBsum" id="7M7U"/>
<dbReference type="PDBsum" id="7M7Y"/>
<dbReference type="PDBsum" id="7M7Z"/>
<dbReference type="PDBsum" id="7M80"/>
<dbReference type="PDBsum" id="7M81"/>
<dbReference type="PDBsum" id="7M82"/>
<dbReference type="PDBsum" id="7M83"/>
<dbReference type="PDBsum" id="7M84"/>
<dbReference type="PDBsum" id="7M85"/>
<dbReference type="PDBsum" id="7M86"/>
<dbReference type="PDBsum" id="7M87"/>
<dbReference type="PDBsum" id="7M88"/>
<dbReference type="PDBsum" id="7M89"/>
<dbReference type="PDBsum" id="7M8A"/>
<dbReference type="PDBsum" id="7M8B"/>
<dbReference type="PDBsum" id="7M8C"/>
<dbReference type="PDBsum" id="7M8D"/>
<dbReference type="PDBsum" id="7U72"/>
<dbReference type="PDBsum" id="7U73"/>
<dbReference type="PDBsum" id="7U74"/>
<dbReference type="PDBsum" id="7U75"/>
<dbReference type="PDBsum" id="7U76"/>
<dbReference type="PDBsum" id="7U77"/>
<dbReference type="PDBsum" id="7U78"/>
<dbReference type="PDBsum" id="7U79"/>
<dbReference type="PDBsum" id="7U7A"/>
<dbReference type="PDBsum" id="7U7B"/>
<dbReference type="PDBsum" id="7U7C"/>
<dbReference type="PDBsum" id="7U7D"/>
<dbReference type="PDBsum" id="7U7E"/>
<dbReference type="PDBsum" id="7U7F"/>
<dbReference type="PDBsum" id="7U7G"/>
<dbReference type="PDBsum" id="7U7I"/>
<dbReference type="PDBsum" id="7U7J"/>
<dbReference type="PDBsum" id="7U7K"/>
<dbReference type="PDBsum" id="7U7L"/>
<dbReference type="PDBsum" id="7U7R"/>
<dbReference type="PDBsum" id="7U7S"/>
<dbReference type="PDBsum" id="7U7T"/>
<dbReference type="PDBsum" id="7U7U"/>
<dbReference type="PDBsum" id="7U7V"/>
<dbReference type="PDBsum" id="7U7W"/>
<dbReference type="PDBsum" id="7U7X"/>
<dbReference type="PDBsum" id="7U7Y"/>
<dbReference type="PDBsum" id="7U7Z"/>
<dbReference type="PDBsum" id="7U80"/>
<dbReference type="PDBsum" id="7U81"/>
<dbReference type="PDBsum" id="7U82"/>
<dbReference type="PDBsum" id="7U83"/>
<dbReference type="PDBsum" id="7U84"/>
<dbReference type="PDBsum" id="8E85"/>
<dbReference type="PDBsum" id="8E86"/>
<dbReference type="PDBsum" id="8E87"/>
<dbReference type="PDBsum" id="8E88"/>
<dbReference type="PDBsum" id="8E89"/>
<dbReference type="PDBsum" id="8E8A"/>
<dbReference type="PDBsum" id="8E8B"/>
<dbReference type="PDBsum" id="8E8C"/>
<dbReference type="PDBsum" id="8E8D"/>
<dbReference type="PDBsum" id="8E8E"/>
<dbReference type="PDBsum" id="8E8F"/>
<dbReference type="PDBsum" id="8E8G"/>
<dbReference type="PDBsum" id="8E8H"/>
<dbReference type="PDBsum" id="8E8J"/>
<dbReference type="PDBsum" id="8E8K"/>
<dbReference type="PDBsum" id="8EVE"/>
<dbReference type="PDBsum" id="8EVF"/>
<dbReference type="PDBsum" id="8FN3"/>
<dbReference type="PDBsum" id="8FOG"/>
<dbReference type="PDBsum" id="8G8H"/>
<dbReference type="PDBsum" id="8G8J"/>
<dbReference type="PDBsum" id="8GBF"/>
<dbReference type="PDBsum" id="8GKR"/>
<dbReference type="PDBsum" id="8GML"/>
<dbReference type="PDBsum" id="8SKI"/>
<dbReference type="PDBsum" id="8UJT"/>
<dbReference type="PDBsum" id="8UJV"/>
<dbReference type="PDBsum" id="8UJX"/>
<dbReference type="PDBsum" id="8UK4"/>
<dbReference type="PDBsum" id="8V7A"/>
<dbReference type="PDBsum" id="8V7B"/>
<dbReference type="PDBsum" id="8V7C"/>
<dbReference type="PDBsum" id="8V7D"/>
<dbReference type="PDBsum" id="8V7E"/>
<dbReference type="PDBsum" id="8V7F"/>
<dbReference type="PDBsum" id="8V7G"/>
<dbReference type="PDBsum" id="8V7H"/>
<dbReference type="PDBsum" id="8V7I"/>
<dbReference type="PDBsum" id="8V7J"/>
<dbReference type="PDBsum" id="8V7K"/>
<dbReference type="PDBsum" id="9CHW"/>
<dbReference type="PDBsum" id="9CI9"/>
<dbReference type="PDBsum" id="9CIH"/>
<dbReference type="PDBsum" id="9CIQ"/>
<dbReference type="PDBsum" id="9CJ9"/>
<dbReference type="BMRB" id="Q9Y253"/>
<dbReference type="SMR" id="Q9Y253"/>
<dbReference type="BioGRID" id="111425">
    <property type="interactions" value="82"/>
</dbReference>
<dbReference type="CORUM" id="Q9Y253"/>
<dbReference type="FunCoup" id="Q9Y253">
    <property type="interactions" value="3263"/>
</dbReference>
<dbReference type="IntAct" id="Q9Y253">
    <property type="interactions" value="33"/>
</dbReference>
<dbReference type="MINT" id="Q9Y253"/>
<dbReference type="STRING" id="9606.ENSP00000361310"/>
<dbReference type="BindingDB" id="Q9Y253"/>
<dbReference type="ChEMBL" id="CHEMBL5542"/>
<dbReference type="DrugCentral" id="Q9Y253"/>
<dbReference type="GlyCosmos" id="Q9Y253">
    <property type="glycosylation" value="1 site, 1 glycan"/>
</dbReference>
<dbReference type="GlyGen" id="Q9Y253">
    <property type="glycosylation" value="5 sites, 1 O-linked glycan (2 sites)"/>
</dbReference>
<dbReference type="iPTMnet" id="Q9Y253"/>
<dbReference type="PhosphoSitePlus" id="Q9Y253"/>
<dbReference type="BioMuta" id="POLH"/>
<dbReference type="DMDM" id="59798441"/>
<dbReference type="jPOST" id="Q9Y253"/>
<dbReference type="MassIVE" id="Q9Y253"/>
<dbReference type="PaxDb" id="9606-ENSP00000361310"/>
<dbReference type="PeptideAtlas" id="Q9Y253"/>
<dbReference type="ProteomicsDB" id="85655">
    <molecule id="Q9Y253-1"/>
</dbReference>
<dbReference type="ProteomicsDB" id="85656">
    <molecule id="Q9Y253-2"/>
</dbReference>
<dbReference type="Antibodypedia" id="1879">
    <property type="antibodies" value="210 antibodies from 31 providers"/>
</dbReference>
<dbReference type="DNASU" id="5429"/>
<dbReference type="Ensembl" id="ENST00000372226.1">
    <molecule id="Q9Y253-2"/>
    <property type="protein sequence ID" value="ENSP00000361300.1"/>
    <property type="gene ID" value="ENSG00000170734.12"/>
</dbReference>
<dbReference type="Ensembl" id="ENST00000372236.9">
    <molecule id="Q9Y253-1"/>
    <property type="protein sequence ID" value="ENSP00000361310.4"/>
    <property type="gene ID" value="ENSG00000170734.12"/>
</dbReference>
<dbReference type="GeneID" id="5429"/>
<dbReference type="KEGG" id="hsa:5429"/>
<dbReference type="MANE-Select" id="ENST00000372236.9">
    <property type="protein sequence ID" value="ENSP00000361310.4"/>
    <property type="RefSeq nucleotide sequence ID" value="NM_006502.3"/>
    <property type="RefSeq protein sequence ID" value="NP_006493.1"/>
</dbReference>
<dbReference type="UCSC" id="uc003ovq.5">
    <molecule id="Q9Y253-1"/>
    <property type="organism name" value="human"/>
</dbReference>
<dbReference type="AGR" id="HGNC:9181"/>
<dbReference type="CTD" id="5429"/>
<dbReference type="DisGeNET" id="5429"/>
<dbReference type="GeneCards" id="POLH"/>
<dbReference type="GeneReviews" id="POLH"/>
<dbReference type="HGNC" id="HGNC:9181">
    <property type="gene designation" value="POLH"/>
</dbReference>
<dbReference type="HPA" id="ENSG00000170734">
    <property type="expression patterns" value="Low tissue specificity"/>
</dbReference>
<dbReference type="MalaCards" id="POLH"/>
<dbReference type="MIM" id="278750">
    <property type="type" value="phenotype"/>
</dbReference>
<dbReference type="MIM" id="603968">
    <property type="type" value="gene"/>
</dbReference>
<dbReference type="neXtProt" id="NX_Q9Y253"/>
<dbReference type="OpenTargets" id="ENSG00000170734"/>
<dbReference type="Orphanet" id="90342">
    <property type="disease" value="Xeroderma pigmentosum variant"/>
</dbReference>
<dbReference type="PharmGKB" id="PA279"/>
<dbReference type="VEuPathDB" id="HostDB:ENSG00000170734"/>
<dbReference type="eggNOG" id="KOG2095">
    <property type="taxonomic scope" value="Eukaryota"/>
</dbReference>
<dbReference type="GeneTree" id="ENSGT00940000157048"/>
<dbReference type="HOGENOM" id="CLU_012348_7_2_1"/>
<dbReference type="InParanoid" id="Q9Y253"/>
<dbReference type="OMA" id="QNHRVAK"/>
<dbReference type="OrthoDB" id="5723at2759"/>
<dbReference type="PAN-GO" id="Q9Y253">
    <property type="GO annotations" value="6 GO annotations based on evolutionary models"/>
</dbReference>
<dbReference type="PhylomeDB" id="Q9Y253"/>
<dbReference type="TreeFam" id="TF103010"/>
<dbReference type="BRENDA" id="2.7.7.7">
    <property type="organism ID" value="2681"/>
</dbReference>
<dbReference type="PathwayCommons" id="Q9Y253"/>
<dbReference type="Reactome" id="R-HSA-110320">
    <property type="pathway name" value="Translesion Synthesis by POLH"/>
</dbReference>
<dbReference type="Reactome" id="R-HSA-5656169">
    <property type="pathway name" value="Termination of translesion DNA synthesis"/>
</dbReference>
<dbReference type="Reactome" id="R-HSA-5685942">
    <property type="pathway name" value="HDR through Homologous Recombination (HRR)"/>
</dbReference>
<dbReference type="SABIO-RK" id="Q9Y253"/>
<dbReference type="SignaLink" id="Q9Y253"/>
<dbReference type="SIGNOR" id="Q9Y253"/>
<dbReference type="BioGRID-ORCS" id="5429">
    <property type="hits" value="19 hits in 1156 CRISPR screens"/>
</dbReference>
<dbReference type="ChiTaRS" id="POLH">
    <property type="organism name" value="human"/>
</dbReference>
<dbReference type="EvolutionaryTrace" id="Q9Y253"/>
<dbReference type="GeneWiki" id="DNA_polymerase_eta"/>
<dbReference type="GenomeRNAi" id="5429"/>
<dbReference type="Pharos" id="Q9Y253">
    <property type="development level" value="Tchem"/>
</dbReference>
<dbReference type="PRO" id="PR:Q9Y253"/>
<dbReference type="Proteomes" id="UP000005640">
    <property type="component" value="Chromosome 6"/>
</dbReference>
<dbReference type="RNAct" id="Q9Y253">
    <property type="molecule type" value="protein"/>
</dbReference>
<dbReference type="Bgee" id="ENSG00000170734">
    <property type="expression patterns" value="Expressed in buccal mucosa cell and 202 other cell types or tissues"/>
</dbReference>
<dbReference type="ExpressionAtlas" id="Q9Y253">
    <property type="expression patterns" value="baseline and differential"/>
</dbReference>
<dbReference type="GO" id="GO:0005829">
    <property type="term" value="C:cytosol"/>
    <property type="evidence" value="ECO:0000314"/>
    <property type="project" value="HPA"/>
</dbReference>
<dbReference type="GO" id="GO:0005654">
    <property type="term" value="C:nucleoplasm"/>
    <property type="evidence" value="ECO:0000314"/>
    <property type="project" value="HPA"/>
</dbReference>
<dbReference type="GO" id="GO:0005634">
    <property type="term" value="C:nucleus"/>
    <property type="evidence" value="ECO:0000318"/>
    <property type="project" value="GO_Central"/>
</dbReference>
<dbReference type="GO" id="GO:0005657">
    <property type="term" value="C:replication fork"/>
    <property type="evidence" value="ECO:0000318"/>
    <property type="project" value="GO_Central"/>
</dbReference>
<dbReference type="GO" id="GO:0035861">
    <property type="term" value="C:site of double-strand break"/>
    <property type="evidence" value="ECO:0000318"/>
    <property type="project" value="GO_Central"/>
</dbReference>
<dbReference type="GO" id="GO:0003684">
    <property type="term" value="F:damaged DNA binding"/>
    <property type="evidence" value="ECO:0000304"/>
    <property type="project" value="ProtInc"/>
</dbReference>
<dbReference type="GO" id="GO:0003887">
    <property type="term" value="F:DNA-directed DNA polymerase activity"/>
    <property type="evidence" value="ECO:0000318"/>
    <property type="project" value="GO_Central"/>
</dbReference>
<dbReference type="GO" id="GO:0008270">
    <property type="term" value="F:zinc ion binding"/>
    <property type="evidence" value="ECO:0007669"/>
    <property type="project" value="UniProtKB-KW"/>
</dbReference>
<dbReference type="GO" id="GO:0071494">
    <property type="term" value="P:cellular response to UV-C"/>
    <property type="evidence" value="ECO:0007669"/>
    <property type="project" value="Ensembl"/>
</dbReference>
<dbReference type="GO" id="GO:0006281">
    <property type="term" value="P:DNA repair"/>
    <property type="evidence" value="ECO:0000304"/>
    <property type="project" value="ProtInc"/>
</dbReference>
<dbReference type="GO" id="GO:0006260">
    <property type="term" value="P:DNA replication"/>
    <property type="evidence" value="ECO:0007669"/>
    <property type="project" value="UniProtKB-KW"/>
</dbReference>
<dbReference type="GO" id="GO:0000731">
    <property type="term" value="P:DNA synthesis involved in DNA repair"/>
    <property type="evidence" value="ECO:0000314"/>
    <property type="project" value="UniProtKB"/>
</dbReference>
<dbReference type="GO" id="GO:0070987">
    <property type="term" value="P:error-free translesion synthesis"/>
    <property type="evidence" value="ECO:0000304"/>
    <property type="project" value="Reactome"/>
</dbReference>
<dbReference type="GO" id="GO:0042276">
    <property type="term" value="P:error-prone translesion synthesis"/>
    <property type="evidence" value="ECO:0000318"/>
    <property type="project" value="GO_Central"/>
</dbReference>
<dbReference type="GO" id="GO:0006290">
    <property type="term" value="P:pyrimidine dimer repair"/>
    <property type="evidence" value="ECO:0007669"/>
    <property type="project" value="Ensembl"/>
</dbReference>
<dbReference type="GO" id="GO:0006282">
    <property type="term" value="P:regulation of DNA repair"/>
    <property type="evidence" value="ECO:0000304"/>
    <property type="project" value="ProtInc"/>
</dbReference>
<dbReference type="GO" id="GO:0009314">
    <property type="term" value="P:response to radiation"/>
    <property type="evidence" value="ECO:0000318"/>
    <property type="project" value="GO_Central"/>
</dbReference>
<dbReference type="GO" id="GO:0010225">
    <property type="term" value="P:response to UV-C"/>
    <property type="evidence" value="ECO:0000314"/>
    <property type="project" value="UniProtKB"/>
</dbReference>
<dbReference type="CDD" id="cd01702">
    <property type="entry name" value="PolY_Pol_eta"/>
    <property type="match status" value="1"/>
</dbReference>
<dbReference type="FunFam" id="3.30.1490.100:FF:000007">
    <property type="entry name" value="DNA polymerase eta"/>
    <property type="match status" value="1"/>
</dbReference>
<dbReference type="FunFam" id="3.30.70.270:FF:000022">
    <property type="entry name" value="DNA polymerase eta"/>
    <property type="match status" value="1"/>
</dbReference>
<dbReference type="FunFam" id="3.40.1170.60:FF:000003">
    <property type="entry name" value="DNA polymerase eta"/>
    <property type="match status" value="1"/>
</dbReference>
<dbReference type="FunFam" id="1.10.150.20:FF:000014">
    <property type="entry name" value="Polymerase (DNA directed), eta"/>
    <property type="match status" value="1"/>
</dbReference>
<dbReference type="Gene3D" id="3.30.70.270">
    <property type="match status" value="2"/>
</dbReference>
<dbReference type="Gene3D" id="3.40.1170.60">
    <property type="match status" value="1"/>
</dbReference>
<dbReference type="Gene3D" id="1.10.150.20">
    <property type="entry name" value="5' to 3' exonuclease, C-terminal subdomain"/>
    <property type="match status" value="1"/>
</dbReference>
<dbReference type="Gene3D" id="3.30.1490.100">
    <property type="entry name" value="DNA polymerase, Y-family, little finger domain"/>
    <property type="match status" value="1"/>
</dbReference>
<dbReference type="IDEAL" id="IID00108"/>
<dbReference type="InterPro" id="IPR043502">
    <property type="entry name" value="DNA/RNA_pol_sf"/>
</dbReference>
<dbReference type="InterPro" id="IPR036775">
    <property type="entry name" value="DNA_pol_Y-fam_lit_finger_sf"/>
</dbReference>
<dbReference type="InterPro" id="IPR017961">
    <property type="entry name" value="DNA_pol_Y-fam_little_finger"/>
</dbReference>
<dbReference type="InterPro" id="IPR052230">
    <property type="entry name" value="DNA_polymerase_eta"/>
</dbReference>
<dbReference type="InterPro" id="IPR043128">
    <property type="entry name" value="Rev_trsase/Diguanyl_cyclase"/>
</dbReference>
<dbReference type="InterPro" id="IPR041298">
    <property type="entry name" value="UBZ3"/>
</dbReference>
<dbReference type="InterPro" id="IPR001126">
    <property type="entry name" value="UmuC"/>
</dbReference>
<dbReference type="PANTHER" id="PTHR45873">
    <property type="entry name" value="DNA POLYMERASE ETA"/>
    <property type="match status" value="1"/>
</dbReference>
<dbReference type="PANTHER" id="PTHR45873:SF1">
    <property type="entry name" value="DNA POLYMERASE ETA"/>
    <property type="match status" value="1"/>
</dbReference>
<dbReference type="Pfam" id="PF00817">
    <property type="entry name" value="IMS"/>
    <property type="match status" value="1"/>
</dbReference>
<dbReference type="Pfam" id="PF11799">
    <property type="entry name" value="IMS_C"/>
    <property type="match status" value="1"/>
</dbReference>
<dbReference type="Pfam" id="PF21704">
    <property type="entry name" value="POLH-Rev1_HhH"/>
    <property type="match status" value="1"/>
</dbReference>
<dbReference type="Pfam" id="PF18439">
    <property type="entry name" value="zf_UBZ"/>
    <property type="match status" value="1"/>
</dbReference>
<dbReference type="PIRSF" id="PIRSF036603">
    <property type="entry name" value="DPol_eta"/>
    <property type="match status" value="1"/>
</dbReference>
<dbReference type="SUPFAM" id="SSF56672">
    <property type="entry name" value="DNA/RNA polymerases"/>
    <property type="match status" value="1"/>
</dbReference>
<dbReference type="SUPFAM" id="SSF100879">
    <property type="entry name" value="Lesion bypass DNA polymerase (Y-family), little finger domain"/>
    <property type="match status" value="1"/>
</dbReference>
<dbReference type="PROSITE" id="PS50173">
    <property type="entry name" value="UMUC"/>
    <property type="match status" value="1"/>
</dbReference>
<dbReference type="PROSITE" id="PS51907">
    <property type="entry name" value="ZF_UBZ3"/>
    <property type="match status" value="1"/>
</dbReference>
<protein>
    <recommendedName>
        <fullName>DNA polymerase eta</fullName>
        <ecNumber evidence="28 29">2.7.7.7</ecNumber>
    </recommendedName>
    <alternativeName>
        <fullName>RAD30 homolog A</fullName>
    </alternativeName>
    <alternativeName>
        <fullName>Xeroderma pigmentosum variant type protein</fullName>
    </alternativeName>
</protein>
<sequence>MATGQDRVVALVDMDCFFVQVEQRQNPHLRNKPCAVVQYKSWKGGGIIAVSYEARAFGVTRSMWADDAKKLCPDLLLAQVRESRGKANLTKYREASVEVMEIMSRFAVIERASIDEAYVDLTSAVQERLQKLQGQPISADLLPSTYIEGLPQGPTTAEETVQKEGMRKQGLFQWLDSLQIDNLTSPDLQLTVGAVIVEEMRAAIERETGFQCSAGISHNKVLAKLACGLNKPNRQTLVSHGSVPQLFSQMPIRKIRSLGGKLGASVIEILGIEYMGELTQFTESQLQSHFGEKNGSWLYAMCRGIEHDPVKPRQLPKTIGCSKNFPGKTALATREQVQWWLLQLAQELEERLTKDRNDNDRVATQLVVSIRVQGDKRLSSLRRCCALTRYDAHKMSHDAFTVIKNCNTSGIQTEWSPPLTMLFLCATKFSASAPSSSTDITSFLSSDPSSLPKVPVTSSEAKTQGSGPAVTATKKATTSLESFFQKAAERQKVKEASLSSLTAPTQAPMSNSPSKPSLPFQTSQSTGTEPFFKQKSLLLKQKQLNNSSVSSPQQNPWSNCKALPNSLPTEYPGCVPVCEGVSKLEESSKATPAEMDLAHNSQSMHASSASKSVLEVTQKATPNPSLLAAEDQVPCEKCGSLVPVWDMPEHMDYHFALELQKSFLQPHSSNPQVVSAVSHQGKRNPKSPLACTNKRPRPEGMQTLESFFKPLTH</sequence>
<proteinExistence type="evidence at protein level"/>
<accession>Q9Y253</accession>
<accession>Q7L8E3</accession>
<accession>Q96BC4</accession>
<accession>Q9BX13</accession>
<organism>
    <name type="scientific">Homo sapiens</name>
    <name type="common">Human</name>
    <dbReference type="NCBI Taxonomy" id="9606"/>
    <lineage>
        <taxon>Eukaryota</taxon>
        <taxon>Metazoa</taxon>
        <taxon>Chordata</taxon>
        <taxon>Craniata</taxon>
        <taxon>Vertebrata</taxon>
        <taxon>Euteleostomi</taxon>
        <taxon>Mammalia</taxon>
        <taxon>Eutheria</taxon>
        <taxon>Euarchontoglires</taxon>
        <taxon>Primates</taxon>
        <taxon>Haplorrhini</taxon>
        <taxon>Catarrhini</taxon>
        <taxon>Hominidae</taxon>
        <taxon>Homo</taxon>
    </lineage>
</organism>